<reference key="1">
    <citation type="journal article" date="1997" name="Genomics">
        <title>The human E6-AP gene (UBE3A) encodes three potential protein isoforms generated by differential splicing.</title>
        <authorList>
            <person name="Yamamoto Y."/>
            <person name="Huibregtse J.M."/>
            <person name="Howley P.M."/>
        </authorList>
    </citation>
    <scope>NUCLEOTIDE SEQUENCE [GENOMIC DNA / MRNA] (ISOFORMS I; II AND III)</scope>
    <scope>VARIANT GLY-290</scope>
    <source>
        <tissue>Keratinocyte</tissue>
    </source>
</reference>
<reference key="2">
    <citation type="journal article" date="1997" name="Nat. Genet.">
        <title>UBE3A/E6-AP mutations cause Angelman syndrome.</title>
        <authorList>
            <person name="Kishino T."/>
            <person name="Lalande M."/>
            <person name="Wagstaff J."/>
        </authorList>
    </citation>
    <scope>NUCLEOTIDE SEQUENCE [MRNA] (ISOFORM I)</scope>
    <source>
        <tissue>Fetal brain</tissue>
    </source>
</reference>
<reference key="3">
    <citation type="journal article" date="1997" name="Nat. Genet.">
        <title>De novo truncating mutations in E6-AP ubiquitin-protein ligase gene (UBE3A) in Angelman syndrome.</title>
        <authorList>
            <person name="Matsuura T."/>
            <person name="Sutcliffe J.S."/>
            <person name="Fang P."/>
            <person name="Galjaard R.-J."/>
            <person name="Jiang Y.-H."/>
            <person name="Benton C.S."/>
            <person name="Rommens J.M."/>
            <person name="Beaudet A.L."/>
        </authorList>
    </citation>
    <scope>NUCLEOTIDE SEQUENCE [GENOMIC DNA] (ISOFORM I)</scope>
    <scope>VARIANTS TYR-44 AND THR-201</scope>
</reference>
<reference key="4">
    <citation type="journal article" date="2004" name="Nat. Genet.">
        <title>Complete sequencing and characterization of 21,243 full-length human cDNAs.</title>
        <authorList>
            <person name="Ota T."/>
            <person name="Suzuki Y."/>
            <person name="Nishikawa T."/>
            <person name="Otsuki T."/>
            <person name="Sugiyama T."/>
            <person name="Irie R."/>
            <person name="Wakamatsu A."/>
            <person name="Hayashi K."/>
            <person name="Sato H."/>
            <person name="Nagai K."/>
            <person name="Kimura K."/>
            <person name="Makita H."/>
            <person name="Sekine M."/>
            <person name="Obayashi M."/>
            <person name="Nishi T."/>
            <person name="Shibahara T."/>
            <person name="Tanaka T."/>
            <person name="Ishii S."/>
            <person name="Yamamoto J."/>
            <person name="Saito K."/>
            <person name="Kawai Y."/>
            <person name="Isono Y."/>
            <person name="Nakamura Y."/>
            <person name="Nagahari K."/>
            <person name="Murakami K."/>
            <person name="Yasuda T."/>
            <person name="Iwayanagi T."/>
            <person name="Wagatsuma M."/>
            <person name="Shiratori A."/>
            <person name="Sudo H."/>
            <person name="Hosoiri T."/>
            <person name="Kaku Y."/>
            <person name="Kodaira H."/>
            <person name="Kondo H."/>
            <person name="Sugawara M."/>
            <person name="Takahashi M."/>
            <person name="Kanda K."/>
            <person name="Yokoi T."/>
            <person name="Furuya T."/>
            <person name="Kikkawa E."/>
            <person name="Omura Y."/>
            <person name="Abe K."/>
            <person name="Kamihara K."/>
            <person name="Katsuta N."/>
            <person name="Sato K."/>
            <person name="Tanikawa M."/>
            <person name="Yamazaki M."/>
            <person name="Ninomiya K."/>
            <person name="Ishibashi T."/>
            <person name="Yamashita H."/>
            <person name="Murakawa K."/>
            <person name="Fujimori K."/>
            <person name="Tanai H."/>
            <person name="Kimata M."/>
            <person name="Watanabe M."/>
            <person name="Hiraoka S."/>
            <person name="Chiba Y."/>
            <person name="Ishida S."/>
            <person name="Ono Y."/>
            <person name="Takiguchi S."/>
            <person name="Watanabe S."/>
            <person name="Yosida M."/>
            <person name="Hotuta T."/>
            <person name="Kusano J."/>
            <person name="Kanehori K."/>
            <person name="Takahashi-Fujii A."/>
            <person name="Hara H."/>
            <person name="Tanase T.-O."/>
            <person name="Nomura Y."/>
            <person name="Togiya S."/>
            <person name="Komai F."/>
            <person name="Hara R."/>
            <person name="Takeuchi K."/>
            <person name="Arita M."/>
            <person name="Imose N."/>
            <person name="Musashino K."/>
            <person name="Yuuki H."/>
            <person name="Oshima A."/>
            <person name="Sasaki N."/>
            <person name="Aotsuka S."/>
            <person name="Yoshikawa Y."/>
            <person name="Matsunawa H."/>
            <person name="Ichihara T."/>
            <person name="Shiohata N."/>
            <person name="Sano S."/>
            <person name="Moriya S."/>
            <person name="Momiyama H."/>
            <person name="Satoh N."/>
            <person name="Takami S."/>
            <person name="Terashima Y."/>
            <person name="Suzuki O."/>
            <person name="Nakagawa S."/>
            <person name="Senoh A."/>
            <person name="Mizoguchi H."/>
            <person name="Goto Y."/>
            <person name="Shimizu F."/>
            <person name="Wakebe H."/>
            <person name="Hishigaki H."/>
            <person name="Watanabe T."/>
            <person name="Sugiyama A."/>
            <person name="Takemoto M."/>
            <person name="Kawakami B."/>
            <person name="Yamazaki M."/>
            <person name="Watanabe K."/>
            <person name="Kumagai A."/>
            <person name="Itakura S."/>
            <person name="Fukuzumi Y."/>
            <person name="Fujimori Y."/>
            <person name="Komiyama M."/>
            <person name="Tashiro H."/>
            <person name="Tanigami A."/>
            <person name="Fujiwara T."/>
            <person name="Ono T."/>
            <person name="Yamada K."/>
            <person name="Fujii Y."/>
            <person name="Ozaki K."/>
            <person name="Hirao M."/>
            <person name="Ohmori Y."/>
            <person name="Kawabata A."/>
            <person name="Hikiji T."/>
            <person name="Kobatake N."/>
            <person name="Inagaki H."/>
            <person name="Ikema Y."/>
            <person name="Okamoto S."/>
            <person name="Okitani R."/>
            <person name="Kawakami T."/>
            <person name="Noguchi S."/>
            <person name="Itoh T."/>
            <person name="Shigeta K."/>
            <person name="Senba T."/>
            <person name="Matsumura K."/>
            <person name="Nakajima Y."/>
            <person name="Mizuno T."/>
            <person name="Morinaga M."/>
            <person name="Sasaki M."/>
            <person name="Togashi T."/>
            <person name="Oyama M."/>
            <person name="Hata H."/>
            <person name="Watanabe M."/>
            <person name="Komatsu T."/>
            <person name="Mizushima-Sugano J."/>
            <person name="Satoh T."/>
            <person name="Shirai Y."/>
            <person name="Takahashi Y."/>
            <person name="Nakagawa K."/>
            <person name="Okumura K."/>
            <person name="Nagase T."/>
            <person name="Nomura N."/>
            <person name="Kikuchi H."/>
            <person name="Masuho Y."/>
            <person name="Yamashita R."/>
            <person name="Nakai K."/>
            <person name="Yada T."/>
            <person name="Nakamura Y."/>
            <person name="Ohara O."/>
            <person name="Isogai T."/>
            <person name="Sugano S."/>
        </authorList>
    </citation>
    <scope>NUCLEOTIDE SEQUENCE [LARGE SCALE MRNA] (ISOFORM III)</scope>
    <source>
        <tissue>Testis</tissue>
    </source>
</reference>
<reference key="5">
    <citation type="journal article" date="2006" name="Nature">
        <title>Analysis of the DNA sequence and duplication history of human chromosome 15.</title>
        <authorList>
            <person name="Zody M.C."/>
            <person name="Garber M."/>
            <person name="Sharpe T."/>
            <person name="Young S.K."/>
            <person name="Rowen L."/>
            <person name="O'Neill K."/>
            <person name="Whittaker C.A."/>
            <person name="Kamal M."/>
            <person name="Chang J.L."/>
            <person name="Cuomo C.A."/>
            <person name="Dewar K."/>
            <person name="FitzGerald M.G."/>
            <person name="Kodira C.D."/>
            <person name="Madan A."/>
            <person name="Qin S."/>
            <person name="Yang X."/>
            <person name="Abbasi N."/>
            <person name="Abouelleil A."/>
            <person name="Arachchi H.M."/>
            <person name="Baradarani L."/>
            <person name="Birditt B."/>
            <person name="Bloom S."/>
            <person name="Bloom T."/>
            <person name="Borowsky M.L."/>
            <person name="Burke J."/>
            <person name="Butler J."/>
            <person name="Cook A."/>
            <person name="DeArellano K."/>
            <person name="DeCaprio D."/>
            <person name="Dorris L. III"/>
            <person name="Dors M."/>
            <person name="Eichler E.E."/>
            <person name="Engels R."/>
            <person name="Fahey J."/>
            <person name="Fleetwood P."/>
            <person name="Friedman C."/>
            <person name="Gearin G."/>
            <person name="Hall J.L."/>
            <person name="Hensley G."/>
            <person name="Johnson E."/>
            <person name="Jones C."/>
            <person name="Kamat A."/>
            <person name="Kaur A."/>
            <person name="Locke D.P."/>
            <person name="Madan A."/>
            <person name="Munson G."/>
            <person name="Jaffe D.B."/>
            <person name="Lui A."/>
            <person name="Macdonald P."/>
            <person name="Mauceli E."/>
            <person name="Naylor J.W."/>
            <person name="Nesbitt R."/>
            <person name="Nicol R."/>
            <person name="O'Leary S.B."/>
            <person name="Ratcliffe A."/>
            <person name="Rounsley S."/>
            <person name="She X."/>
            <person name="Sneddon K.M.B."/>
            <person name="Stewart S."/>
            <person name="Sougnez C."/>
            <person name="Stone S.M."/>
            <person name="Topham K."/>
            <person name="Vincent D."/>
            <person name="Wang S."/>
            <person name="Zimmer A.R."/>
            <person name="Birren B.W."/>
            <person name="Hood L."/>
            <person name="Lander E.S."/>
            <person name="Nusbaum C."/>
        </authorList>
    </citation>
    <scope>NUCLEOTIDE SEQUENCE [LARGE SCALE GENOMIC DNA]</scope>
</reference>
<reference key="6">
    <citation type="submission" date="2005-07" db="EMBL/GenBank/DDBJ databases">
        <authorList>
            <person name="Mural R.J."/>
            <person name="Istrail S."/>
            <person name="Sutton G.G."/>
            <person name="Florea L."/>
            <person name="Halpern A.L."/>
            <person name="Mobarry C.M."/>
            <person name="Lippert R."/>
            <person name="Walenz B."/>
            <person name="Shatkay H."/>
            <person name="Dew I."/>
            <person name="Miller J.R."/>
            <person name="Flanigan M.J."/>
            <person name="Edwards N.J."/>
            <person name="Bolanos R."/>
            <person name="Fasulo D."/>
            <person name="Halldorsson B.V."/>
            <person name="Hannenhalli S."/>
            <person name="Turner R."/>
            <person name="Yooseph S."/>
            <person name="Lu F."/>
            <person name="Nusskern D.R."/>
            <person name="Shue B.C."/>
            <person name="Zheng X.H."/>
            <person name="Zhong F."/>
            <person name="Delcher A.L."/>
            <person name="Huson D.H."/>
            <person name="Kravitz S.A."/>
            <person name="Mouchard L."/>
            <person name="Reinert K."/>
            <person name="Remington K.A."/>
            <person name="Clark A.G."/>
            <person name="Waterman M.S."/>
            <person name="Eichler E.E."/>
            <person name="Adams M.D."/>
            <person name="Hunkapiller M.W."/>
            <person name="Myers E.W."/>
            <person name="Venter J.C."/>
        </authorList>
    </citation>
    <scope>NUCLEOTIDE SEQUENCE [LARGE SCALE GENOMIC DNA]</scope>
</reference>
<reference key="7">
    <citation type="journal article" date="1993" name="Mol. Cell. Biol.">
        <title>Cloning and expression of the cDNA for E6-AP, a protein that mediates the interaction of the human papillomavirus E6 oncoprotein with p53.</title>
        <authorList>
            <person name="Huibregtse J.M."/>
            <person name="Scheffner M."/>
            <person name="Howley P.M."/>
        </authorList>
    </citation>
    <scope>NUCLEOTIDE SEQUENCE [MRNA] OF 11-875</scope>
    <scope>PARTIAL PROTEIN SEQUENCE</scope>
    <scope>FUNCTION (MICROBIAL INFECTION)</scope>
    <scope>VARIANT GLY-290</scope>
    <source>
        <tissue>Keratinocyte</tissue>
    </source>
</reference>
<reference key="8">
    <citation type="journal article" date="1998" name="Eur. J. Biochem.">
        <title>The ubiquitin-protein ligase E6-associated protein (E6-AP) serves as its own substrate.</title>
        <authorList>
            <person name="Nuber U."/>
            <person name="Schwarz S.E."/>
            <person name="Scheffner M."/>
        </authorList>
    </citation>
    <scope>CHARACTERIZATION</scope>
</reference>
<reference key="9">
    <citation type="submission" date="1997-08" db="EMBL/GenBank/DDBJ databases">
        <title>Mutations in the E6-AP gene (UBE3A) in patients with Angelman syndrome.</title>
        <authorList>
            <person name="Hennies H.C."/>
            <person name="Buerger J."/>
            <person name="Sperling K."/>
            <person name="Reis A."/>
        </authorList>
    </citation>
    <scope>NUCLEOTIDE SEQUENCE [GENOMIC DNA] OF 25-787</scope>
    <scope>VARIANT GLY-290</scope>
</reference>
<reference key="10">
    <citation type="journal article" date="1999" name="Int. J. Cancer">
        <title>Antigens recognized by autologous antibody in patients with renal-cell carcinoma.</title>
        <authorList>
            <person name="Scanlan M.J."/>
            <person name="Gordan J.D."/>
            <person name="Williamson B."/>
            <person name="Stockert E."/>
            <person name="Bander N.H."/>
            <person name="Jongeneel C.V."/>
            <person name="Gure A.O."/>
            <person name="Jaeger D."/>
            <person name="Jaeger E."/>
            <person name="Knuth A."/>
            <person name="Chen Y.-T."/>
            <person name="Old L.J."/>
        </authorList>
    </citation>
    <scope>IDENTIFICATION AS A RENAL CANCER ANTIGEN</scope>
    <source>
        <tissue>Renal cell carcinoma</tissue>
    </source>
</reference>
<reference key="11">
    <citation type="journal article" date="1999" name="J. Biol. Chem.">
        <title>Identification of HHR23A as a substrate for E6-associated protein-mediated ubiquitination.</title>
        <authorList>
            <person name="Kumar S."/>
            <person name="Talis A.L."/>
            <person name="Howley P.M."/>
        </authorList>
    </citation>
    <scope>FUNCTION</scope>
</reference>
<reference key="12">
    <citation type="journal article" date="2000" name="Mol. Cell">
        <title>The hPLIC proteins may provide a link between the ubiquitination machinery and the proteasome.</title>
        <authorList>
            <person name="Kleijnen M.F."/>
            <person name="Shih A.H."/>
            <person name="Zhou P."/>
            <person name="Kumar S."/>
            <person name="Soccio R.E."/>
            <person name="Kedersha N.L."/>
            <person name="Gill G."/>
            <person name="Howley P.M."/>
        </authorList>
    </citation>
    <scope>INTERACTION WITH UBQLN1 AND UBQLN2</scope>
</reference>
<reference key="13">
    <citation type="journal article" date="2002" name="Biochem. Biophys. Res. Commun.">
        <title>VCY2 protein interacts with the HECT domain of ubiquitin-protein ligase E3A.</title>
        <authorList>
            <person name="Wong E.Y."/>
            <person name="Tse J.Y."/>
            <person name="Yao K.M."/>
            <person name="Tam P.C."/>
            <person name="Yeung W.S."/>
        </authorList>
    </citation>
    <scope>INTERACTION WITH BPY2</scope>
</reference>
<reference key="14">
    <citation type="journal article" date="2006" name="Mol. Endocrinol.">
        <title>WW domain binding protein-2, an E6-associated protein interacting protein, acts as a coactivator of estrogen and progesterone receptors.</title>
        <authorList>
            <person name="Dhananjayan S.C."/>
            <person name="Ramamoorthy S."/>
            <person name="Khan O.Y."/>
            <person name="Ismail A."/>
            <person name="Sun J."/>
            <person name="Slingerland J."/>
            <person name="O'Malley B.W."/>
            <person name="Nawaz Z."/>
        </authorList>
    </citation>
    <scope>FUNCTION</scope>
    <scope>INTERACTION WITH ESR1 AND WBP2</scope>
</reference>
<reference key="15">
    <citation type="journal article" date="2007" name="Biochemistry">
        <title>Mass spectrometric characterization of the affinity-purified human 26S proteasome complex.</title>
        <authorList>
            <person name="Wang X."/>
            <person name="Chen C.-F."/>
            <person name="Baker P.R."/>
            <person name="Chen P.-L."/>
            <person name="Kaiser P."/>
            <person name="Huang L."/>
        </authorList>
    </citation>
    <scope>IDENTIFICATION BY MASS SPECTROMETRY [LARGE SCALE ANALYSIS]</scope>
    <source>
        <tissue>Embryonic kidney</tissue>
    </source>
</reference>
<reference key="16">
    <citation type="journal article" date="2007" name="J. Virol.">
        <title>E6AP ubiquitin ligase mediates ubiquitylation and degradation of hepatitis C virus core protein.</title>
        <authorList>
            <person name="Shirakura M."/>
            <person name="Murakami K."/>
            <person name="Ichimura T."/>
            <person name="Suzuki R."/>
            <person name="Shimoji T."/>
            <person name="Fukuda K."/>
            <person name="Abe K."/>
            <person name="Sato S."/>
            <person name="Fukasawa M."/>
            <person name="Yamakawa Y."/>
            <person name="Nishijima M."/>
            <person name="Moriishi K."/>
            <person name="Matsuura Y."/>
            <person name="Wakita T."/>
            <person name="Suzuki T."/>
            <person name="Howley P.M."/>
            <person name="Miyamura T."/>
            <person name="Shoji I."/>
        </authorList>
    </citation>
    <scope>INTERACTION WITH HCV CORE PROTEIN</scope>
</reference>
<reference key="17">
    <citation type="journal article" date="2007" name="Science">
        <title>ATM and ATR substrate analysis reveals extensive protein networks responsive to DNA damage.</title>
        <authorList>
            <person name="Matsuoka S."/>
            <person name="Ballif B.A."/>
            <person name="Smogorzewska A."/>
            <person name="McDonald E.R. III"/>
            <person name="Hurov K.E."/>
            <person name="Luo J."/>
            <person name="Bakalarski C.E."/>
            <person name="Zhao Z."/>
            <person name="Solimini N."/>
            <person name="Lerenthal Y."/>
            <person name="Shiloh Y."/>
            <person name="Gygi S.P."/>
            <person name="Elledge S.J."/>
        </authorList>
    </citation>
    <scope>PHOSPHORYLATION [LARGE SCALE ANALYSIS] AT SER-218</scope>
    <scope>IDENTIFICATION BY MASS SPECTROMETRY [LARGE SCALE ANALYSIS]</scope>
    <source>
        <tissue>Embryonic kidney</tissue>
    </source>
</reference>
<reference key="18">
    <citation type="journal article" date="2009" name="Cell Death Differ.">
        <title>E6AP promotes the degradation of the PML tumor suppressor.</title>
        <authorList>
            <person name="Louria-Hayon I."/>
            <person name="Alsheich-Bartok O."/>
            <person name="Levav-Cohen Y."/>
            <person name="Silberman I."/>
            <person name="Berger M."/>
            <person name="Grossman T."/>
            <person name="Matentzoglu K."/>
            <person name="Jiang Y.H."/>
            <person name="Muller S."/>
            <person name="Scheffner M."/>
            <person name="Haupt S."/>
            <person name="Haupt Y."/>
        </authorList>
    </citation>
    <scope>FUNCTION</scope>
</reference>
<reference key="19">
    <citation type="journal article" date="2009" name="J. Biol. Chem.">
        <title>The ubiquitin ligase E6-AP is induced and recruited to aggresomes in response to proteasome inhibition and may be involved in the ubiquitination of Hsp70-bound misfolded proteins.</title>
        <authorList>
            <person name="Mishra A."/>
            <person name="Godavarthi S.K."/>
            <person name="Maheshwari M."/>
            <person name="Goswami A."/>
            <person name="Jana N.R."/>
        </authorList>
    </citation>
    <scope>FUNCTION</scope>
</reference>
<reference key="20">
    <citation type="journal article" date="2009" name="J. Cell. Biochem.">
        <title>Identification of annexin A1 as a novel substrate for E6AP-mediated ubiquitylation.</title>
        <authorList>
            <person name="Shimoji T."/>
            <person name="Murakami K."/>
            <person name="Sugiyama Y."/>
            <person name="Matsuda M."/>
            <person name="Inubushi S."/>
            <person name="Nasu J."/>
            <person name="Shirakura M."/>
            <person name="Suzuki T."/>
            <person name="Wakita T."/>
            <person name="Kishino T."/>
            <person name="Hotta H."/>
            <person name="Miyamura T."/>
            <person name="Shoji I."/>
        </authorList>
    </citation>
    <scope>FUNCTION</scope>
</reference>
<reference key="21">
    <citation type="journal article" date="2009" name="Neurobiol. Dis.">
        <title>UBE3A/E6-AP regulates cell proliferation by promoting proteasomal degrADation of p27.</title>
        <authorList>
            <person name="Mishra A."/>
            <person name="Godavarthi S.K."/>
            <person name="Jana N.R."/>
        </authorList>
    </citation>
    <scope>FUNCTION</scope>
</reference>
<reference key="22">
    <citation type="journal article" date="2009" name="Sci. Signal.">
        <title>Quantitative phosphoproteomic analysis of T cell receptor signaling reveals system-wide modulation of protein-protein interactions.</title>
        <authorList>
            <person name="Mayya V."/>
            <person name="Lundgren D.H."/>
            <person name="Hwang S.-I."/>
            <person name="Rezaul K."/>
            <person name="Wu L."/>
            <person name="Eng J.K."/>
            <person name="Rodionov V."/>
            <person name="Han D.K."/>
        </authorList>
    </citation>
    <scope>PHOSPHORYLATION [LARGE SCALE ANALYSIS] AT SER-218</scope>
    <scope>IDENTIFICATION BY MASS SPECTROMETRY [LARGE SCALE ANALYSIS]</scope>
    <source>
        <tissue>Leukemic T-cell</tissue>
    </source>
</reference>
<reference key="23">
    <citation type="journal article" date="2011" name="BMC Syst. Biol.">
        <title>Initial characterization of the human central proteome.</title>
        <authorList>
            <person name="Burkard T.R."/>
            <person name="Planyavsky M."/>
            <person name="Kaupe I."/>
            <person name="Breitwieser F.P."/>
            <person name="Buerckstuemmer T."/>
            <person name="Bennett K.L."/>
            <person name="Superti-Furga G."/>
            <person name="Colinge J."/>
        </authorList>
    </citation>
    <scope>IDENTIFICATION BY MASS SPECTROMETRY [LARGE SCALE ANALYSIS]</scope>
</reference>
<reference key="24">
    <citation type="journal article" date="2011" name="FASEB J.">
        <title>Tyrosine phosphorylation of transcriptional coactivator WW-domain binding protein 2 regulates estrogen receptor alpha function in breast cancer via the Wnt pathway.</title>
        <authorList>
            <person name="Lim S.K."/>
            <person name="Orhant-Prioux M."/>
            <person name="Toy W."/>
            <person name="Tan K.Y."/>
            <person name="Lim Y.P."/>
        </authorList>
    </citation>
    <scope>INTERACTION WITH WBP2</scope>
</reference>
<reference key="25">
    <citation type="journal article" date="2012" name="Mol. Cell. Biol.">
        <title>Identification and proteomic analysis of distinct UBE3A/E6AP protein complexes.</title>
        <authorList>
            <person name="Martinez-Noel G."/>
            <person name="Galligan J.T."/>
            <person name="Sowa M.E."/>
            <person name="Arndt V."/>
            <person name="Overton T.M."/>
            <person name="Harper J.W."/>
            <person name="Howley P.M."/>
        </authorList>
    </citation>
    <scope>FUNCTION</scope>
    <scope>INTERACTION WITH HIF1AN; MAPK6; NEURL4 AND PSMD4</scope>
</reference>
<reference key="26">
    <citation type="journal article" date="2013" name="Biochemistry">
        <title>c-Abl phosphorylates E6AP and regulates its E3 ubiquitin ligase activity.</title>
        <authorList>
            <person name="Chan A.L."/>
            <person name="Grossman T."/>
            <person name="Zuckerman V."/>
            <person name="Campigli Di Giammartino D."/>
            <person name="Moshel O."/>
            <person name="Scheffner M."/>
            <person name="Monahan B."/>
            <person name="Pilling P."/>
            <person name="Jiang Y.H."/>
            <person name="Haupt S."/>
            <person name="Schueler-Furman O."/>
            <person name="Haupt Y."/>
        </authorList>
    </citation>
    <scope>PHOSPHORYLATION AT TYR-659</scope>
</reference>
<reference key="27">
    <citation type="journal article" date="2014" name="J. Biol. Chem.">
        <title>The active form of E6-associated protein (E6AP)/UBE3A ubiquitin ligase is an oligomer.</title>
        <authorList>
            <person name="Ronchi V.P."/>
            <person name="Klein J.M."/>
            <person name="Edwards D.J."/>
            <person name="Haas A.L."/>
        </authorList>
    </citation>
    <scope>FUNCTION</scope>
    <scope>CATALYTIC ACTIVITY</scope>
    <scope>SUBUNIT</scope>
    <scope>MUTAGENESIS OF PHE-750</scope>
</reference>
<reference key="28">
    <citation type="journal article" date="2014" name="Nucleic Acids Res.">
        <title>The E3 ubiquitin ligase UBE3A is an integral component of the molecular circadian clock through regulating the BMAL1 transcription factor.</title>
        <authorList>
            <person name="Gossan N.C."/>
            <person name="Zhang F."/>
            <person name="Guo B."/>
            <person name="Jin D."/>
            <person name="Yoshitane H."/>
            <person name="Yao A."/>
            <person name="Glossop N."/>
            <person name="Zhang Y.Q."/>
            <person name="Fukada Y."/>
            <person name="Meng Q.J."/>
        </authorList>
    </citation>
    <scope>FUNCTION</scope>
    <scope>INTERACTION WITH BMAL1</scope>
</reference>
<reference key="29">
    <citation type="journal article" date="2018" name="Elife">
        <title>UBE3A-mediated p18/LAMTOR1 ubiquitination and degradation regulate mTORC1 activity and synaptic plasticity.</title>
        <authorList>
            <person name="Sun J."/>
            <person name="Liu Y."/>
            <person name="Jia Y."/>
            <person name="Hao X."/>
            <person name="Lin W.J."/>
            <person name="Tran J."/>
            <person name="Lynch G."/>
            <person name="Baudry M."/>
            <person name="Bi X."/>
        </authorList>
    </citation>
    <scope>FUNCTION</scope>
</reference>
<reference key="30">
    <citation type="journal article" date="1999" name="Science">
        <title>Structure of an E6AP-UbcH7 complex: insights into ubiquitination by the E2-E3 enzyme cascade.</title>
        <authorList>
            <person name="Huang L."/>
            <person name="Kinnucan E."/>
            <person name="Wang G."/>
            <person name="Beaudenon S."/>
            <person name="Howley P.M."/>
            <person name="Huibregtse J.M."/>
            <person name="Pavletich N.P."/>
        </authorList>
    </citation>
    <scope>X-RAY CRYSTALLOGRAPHY (2.6 ANGSTROMS) OF 495-852 IN COMPLEX WITH UBE2L3</scope>
</reference>
<reference key="31">
    <citation type="journal article" date="2001" name="Biochemistry">
        <title>Solution structure determination and mutational analysis of the papillomavirus E6 interacting peptide of E6AP.</title>
        <authorList>
            <person name="Be X."/>
            <person name="Hong Y."/>
            <person name="Wei J."/>
            <person name="Androphy E.J."/>
            <person name="Chen J.J."/>
            <person name="Baleja J.D."/>
        </authorList>
    </citation>
    <scope>STRUCTURE BY NMR OF 401-418</scope>
</reference>
<reference key="32">
    <citation type="journal article" date="2011" name="J. Biomol. NMR">
        <title>Zn-binding AZUL domain of human ubiquitin protein ligase Ube3A.</title>
        <authorList>
            <person name="Lemak A."/>
            <person name="Yee A."/>
            <person name="Bezsonova I."/>
            <person name="Dhe-Paganon S."/>
            <person name="Arrowsmith C.H."/>
        </authorList>
    </citation>
    <scope>STRUCTURE BY NMR OF 24-87</scope>
    <scope>ZINC-FINGER</scope>
</reference>
<reference key="33">
    <citation type="journal article" date="1998" name="Am. J. Hum. Genet.">
        <title>Mutation analysis of UBE3A in Angelman syndrome patients.</title>
        <authorList>
            <person name="Malzac P."/>
            <person name="Webber H."/>
            <person name="Moncla A."/>
            <person name="Graham J.M. Jr."/>
            <person name="Kukolich M."/>
            <person name="Williams C."/>
            <person name="Pagon R.A."/>
            <person name="Ramsdell L.A."/>
            <person name="Kishino T."/>
            <person name="Wagstaff J."/>
        </authorList>
    </citation>
    <scope>VARIANT AS ILE-826 INS</scope>
    <scope>VARIANTS HIS-62; THR-201 AND PRO-372</scope>
    <scope>INVOLVEMENT IN AS</scope>
</reference>
<reference key="34">
    <citation type="journal article" date="2014" name="Hum. Mutat.">
        <title>Mutation update for UBE3A variants in Angelman syndrome.</title>
        <authorList>
            <person name="Sadikovic B."/>
            <person name="Fernandes P."/>
            <person name="Zhang V.W."/>
            <person name="Ward P.A."/>
            <person name="Miloslavskaya I."/>
            <person name="Rhead W."/>
            <person name="Rosenbaum R."/>
            <person name="Gin R."/>
            <person name="Roa B."/>
            <person name="Fang P."/>
        </authorList>
    </citation>
    <scope>VARIANTS AS LYS-129; VAL-235; GLN-260; HIS-260; TRP-286; PRO-458; LEU-481; PRO-500; ARG-568; LYS-589; GLN-607; ILE-679; CYS-713 AND LEU-850</scope>
    <scope>VARIANTS ARG-140; GLY-156; THR-293; THR-358; ILE-501; GLU-611; PRO-611; ARG-696 AND ILE-785</scope>
</reference>
<dbReference type="EC" id="2.3.2.26" evidence="18"/>
<dbReference type="EMBL" id="X98021">
    <property type="protein sequence ID" value="CAA66653.1"/>
    <property type="molecule type" value="Genomic_DNA"/>
</dbReference>
<dbReference type="EMBL" id="X98027">
    <property type="protein sequence ID" value="CAA66653.1"/>
    <property type="status" value="JOINED"/>
    <property type="molecule type" value="Genomic_DNA"/>
</dbReference>
<dbReference type="EMBL" id="X98022">
    <property type="protein sequence ID" value="CAA66653.1"/>
    <property type="status" value="JOINED"/>
    <property type="molecule type" value="Genomic_DNA"/>
</dbReference>
<dbReference type="EMBL" id="X98023">
    <property type="protein sequence ID" value="CAA66653.1"/>
    <property type="status" value="JOINED"/>
    <property type="molecule type" value="Genomic_DNA"/>
</dbReference>
<dbReference type="EMBL" id="X98024">
    <property type="protein sequence ID" value="CAA66653.1"/>
    <property type="status" value="JOINED"/>
    <property type="molecule type" value="Genomic_DNA"/>
</dbReference>
<dbReference type="EMBL" id="X98025">
    <property type="protein sequence ID" value="CAA66653.1"/>
    <property type="status" value="JOINED"/>
    <property type="molecule type" value="Genomic_DNA"/>
</dbReference>
<dbReference type="EMBL" id="X98026">
    <property type="protein sequence ID" value="CAA66653.1"/>
    <property type="status" value="JOINED"/>
    <property type="molecule type" value="Genomic_DNA"/>
</dbReference>
<dbReference type="EMBL" id="X98028">
    <property type="protein sequence ID" value="CAA66653.1"/>
    <property type="status" value="JOINED"/>
    <property type="molecule type" value="Genomic_DNA"/>
</dbReference>
<dbReference type="EMBL" id="X98029">
    <property type="protein sequence ID" value="CAA66653.1"/>
    <property type="status" value="JOINED"/>
    <property type="molecule type" value="Genomic_DNA"/>
</dbReference>
<dbReference type="EMBL" id="X98030">
    <property type="protein sequence ID" value="CAA66653.1"/>
    <property type="status" value="JOINED"/>
    <property type="molecule type" value="Genomic_DNA"/>
</dbReference>
<dbReference type="EMBL" id="X98031">
    <property type="protein sequence ID" value="CAA66654.1"/>
    <property type="molecule type" value="mRNA"/>
</dbReference>
<dbReference type="EMBL" id="X98032">
    <property type="protein sequence ID" value="CAA66655.1"/>
    <property type="molecule type" value="mRNA"/>
</dbReference>
<dbReference type="EMBL" id="X98033">
    <property type="protein sequence ID" value="CAA66656.1"/>
    <property type="molecule type" value="mRNA"/>
</dbReference>
<dbReference type="EMBL" id="AC100774">
    <property type="status" value="NOT_ANNOTATED_CDS"/>
    <property type="molecule type" value="Genomic_DNA"/>
</dbReference>
<dbReference type="EMBL" id="AK292514">
    <property type="protein sequence ID" value="BAF85203.1"/>
    <property type="molecule type" value="mRNA"/>
</dbReference>
<dbReference type="EMBL" id="AC124997">
    <property type="status" value="NOT_ANNOTATED_CDS"/>
    <property type="molecule type" value="Genomic_DNA"/>
</dbReference>
<dbReference type="EMBL" id="CH471151">
    <property type="protein sequence ID" value="EAW57645.1"/>
    <property type="molecule type" value="Genomic_DNA"/>
</dbReference>
<dbReference type="EMBL" id="L07557">
    <property type="protein sequence ID" value="AAA35542.1"/>
    <property type="molecule type" value="mRNA"/>
</dbReference>
<dbReference type="EMBL" id="AF016708">
    <property type="protein sequence ID" value="AAB69154.1"/>
    <property type="molecule type" value="Genomic_DNA"/>
</dbReference>
<dbReference type="EMBL" id="AF016703">
    <property type="protein sequence ID" value="AAB69154.1"/>
    <property type="status" value="JOINED"/>
    <property type="molecule type" value="Genomic_DNA"/>
</dbReference>
<dbReference type="EMBL" id="AF016704">
    <property type="protein sequence ID" value="AAB69154.1"/>
    <property type="status" value="JOINED"/>
    <property type="molecule type" value="Genomic_DNA"/>
</dbReference>
<dbReference type="EMBL" id="AF016705">
    <property type="protein sequence ID" value="AAB69154.1"/>
    <property type="status" value="JOINED"/>
    <property type="molecule type" value="Genomic_DNA"/>
</dbReference>
<dbReference type="EMBL" id="AF016706">
    <property type="protein sequence ID" value="AAB69154.1"/>
    <property type="status" value="JOINED"/>
    <property type="molecule type" value="Genomic_DNA"/>
</dbReference>
<dbReference type="EMBL" id="AF016707">
    <property type="protein sequence ID" value="AAB69154.1"/>
    <property type="status" value="JOINED"/>
    <property type="molecule type" value="Genomic_DNA"/>
</dbReference>
<dbReference type="EMBL" id="U84404">
    <property type="protein sequence ID" value="AAB49301.1"/>
    <property type="molecule type" value="mRNA"/>
</dbReference>
<dbReference type="EMBL" id="AJ001107">
    <property type="protein sequence ID" value="CAA04534.1"/>
    <property type="molecule type" value="Genomic_DNA"/>
</dbReference>
<dbReference type="EMBL" id="AJ001108">
    <property type="protein sequence ID" value="CAA04535.1"/>
    <property type="molecule type" value="Genomic_DNA"/>
</dbReference>
<dbReference type="EMBL" id="AJ001109">
    <property type="protein sequence ID" value="CAA04536.1"/>
    <property type="molecule type" value="Genomic_DNA"/>
</dbReference>
<dbReference type="EMBL" id="AJ001110">
    <property type="protein sequence ID" value="CAA04537.1"/>
    <property type="molecule type" value="Genomic_DNA"/>
</dbReference>
<dbReference type="EMBL" id="AJ001111">
    <property type="protein sequence ID" value="CAA04538.1"/>
    <property type="molecule type" value="Genomic_DNA"/>
</dbReference>
<dbReference type="EMBL" id="AJ001112">
    <property type="protein sequence ID" value="CAA04539.1"/>
    <property type="molecule type" value="Genomic_DNA"/>
</dbReference>
<dbReference type="CCDS" id="CCDS32177.1">
    <molecule id="Q05086-2"/>
</dbReference>
<dbReference type="CCDS" id="CCDS45191.1">
    <molecule id="Q05086-3"/>
</dbReference>
<dbReference type="CCDS" id="CCDS45192.1">
    <molecule id="Q05086-1"/>
</dbReference>
<dbReference type="CCDS" id="CCDS86436.1">
    <molecule id="Q05086-2"/>
</dbReference>
<dbReference type="RefSeq" id="NP_000453.2">
    <molecule id="Q05086-1"/>
    <property type="nucleotide sequence ID" value="NM_000462.3"/>
</dbReference>
<dbReference type="RefSeq" id="NP_001341434.1">
    <molecule id="Q05086-3"/>
    <property type="nucleotide sequence ID" value="NM_001354505.1"/>
</dbReference>
<dbReference type="RefSeq" id="NP_001341435.1">
    <molecule id="Q05086-2"/>
    <property type="nucleotide sequence ID" value="NM_001354506.2"/>
</dbReference>
<dbReference type="RefSeq" id="NP_001341436.1">
    <molecule id="Q05086-2"/>
    <property type="nucleotide sequence ID" value="NM_001354507.2"/>
</dbReference>
<dbReference type="RefSeq" id="NP_001341437.1">
    <molecule id="Q05086-2"/>
    <property type="nucleotide sequence ID" value="NM_001354508.2"/>
</dbReference>
<dbReference type="RefSeq" id="NP_001341438.1">
    <molecule id="Q05086-2"/>
    <property type="nucleotide sequence ID" value="NM_001354509.2"/>
</dbReference>
<dbReference type="RefSeq" id="NP_001341440.1">
    <molecule id="Q05086-2"/>
    <property type="nucleotide sequence ID" value="NM_001354511.2"/>
</dbReference>
<dbReference type="RefSeq" id="NP_001341441.1">
    <molecule id="Q05086-2"/>
    <property type="nucleotide sequence ID" value="NM_001354512.2"/>
</dbReference>
<dbReference type="RefSeq" id="NP_001341442.1">
    <molecule id="Q05086-2"/>
    <property type="nucleotide sequence ID" value="NM_001354513.2"/>
</dbReference>
<dbReference type="RefSeq" id="NP_001341452.1">
    <molecule id="Q05086-2"/>
    <property type="nucleotide sequence ID" value="NM_001354523.2"/>
</dbReference>
<dbReference type="RefSeq" id="NP_001341455.1">
    <molecule id="Q05086-2"/>
    <property type="nucleotide sequence ID" value="NM_001354526.1"/>
</dbReference>
<dbReference type="RefSeq" id="NP_001341467.1">
    <molecule id="Q05086-3"/>
    <property type="nucleotide sequence ID" value="NM_001354538.2"/>
</dbReference>
<dbReference type="RefSeq" id="NP_001341468.1">
    <molecule id="Q05086-2"/>
    <property type="nucleotide sequence ID" value="NM_001354539.2"/>
</dbReference>
<dbReference type="RefSeq" id="NP_001341469.1">
    <molecule id="Q05086-2"/>
    <property type="nucleotide sequence ID" value="NM_001354540.2"/>
</dbReference>
<dbReference type="RefSeq" id="NP_001341470.1">
    <molecule id="Q05086-2"/>
    <property type="nucleotide sequence ID" value="NM_001354541.2"/>
</dbReference>
<dbReference type="RefSeq" id="NP_001341471.1">
    <molecule id="Q05086-2"/>
    <property type="nucleotide sequence ID" value="NM_001354542.2"/>
</dbReference>
<dbReference type="RefSeq" id="NP_001341472.1">
    <molecule id="Q05086-2"/>
    <property type="nucleotide sequence ID" value="NM_001354543.2"/>
</dbReference>
<dbReference type="RefSeq" id="NP_001341473.1">
    <molecule id="Q05086-2"/>
    <property type="nucleotide sequence ID" value="NM_001354544.2"/>
</dbReference>
<dbReference type="RefSeq" id="NP_001361390.1">
    <molecule id="Q05086-2"/>
    <property type="nucleotide sequence ID" value="NM_001374461.1"/>
</dbReference>
<dbReference type="RefSeq" id="NP_570853.1">
    <molecule id="Q05086-2"/>
    <property type="nucleotide sequence ID" value="NM_130838.4"/>
</dbReference>
<dbReference type="RefSeq" id="NP_570854.1">
    <molecule id="Q05086-3"/>
    <property type="nucleotide sequence ID" value="NM_130839.5"/>
</dbReference>
<dbReference type="RefSeq" id="XP_005268324.1">
    <property type="nucleotide sequence ID" value="XM_005268267.4"/>
</dbReference>
<dbReference type="RefSeq" id="XP_005268325.1">
    <property type="nucleotide sequence ID" value="XM_005268268.4"/>
</dbReference>
<dbReference type="RefSeq" id="XP_005268326.1">
    <property type="nucleotide sequence ID" value="XM_005268269.4"/>
</dbReference>
<dbReference type="RefSeq" id="XP_005268327.1">
    <property type="nucleotide sequence ID" value="XM_005268270.4"/>
</dbReference>
<dbReference type="RefSeq" id="XP_005268328.1">
    <property type="nucleotide sequence ID" value="XM_005268271.4"/>
</dbReference>
<dbReference type="RefSeq" id="XP_006720738.1">
    <property type="nucleotide sequence ID" value="XM_006720675.3"/>
</dbReference>
<dbReference type="RefSeq" id="XP_006720739.1">
    <property type="nucleotide sequence ID" value="XM_006720676.3"/>
</dbReference>
<dbReference type="RefSeq" id="XP_011520296.1">
    <property type="nucleotide sequence ID" value="XM_011521994.2"/>
</dbReference>
<dbReference type="RefSeq" id="XP_011520297.1">
    <molecule id="Q05086-1"/>
    <property type="nucleotide sequence ID" value="XM_011521995.4"/>
</dbReference>
<dbReference type="RefSeq" id="XP_016878033.1">
    <property type="nucleotide sequence ID" value="XM_017022544.1"/>
</dbReference>
<dbReference type="RefSeq" id="XP_016878034.1">
    <property type="nucleotide sequence ID" value="XM_017022545.1"/>
</dbReference>
<dbReference type="RefSeq" id="XP_016878035.1">
    <property type="nucleotide sequence ID" value="XM_017022546.1"/>
</dbReference>
<dbReference type="RefSeq" id="XP_016878036.1">
    <molecule id="Q05086-3"/>
    <property type="nucleotide sequence ID" value="XM_017022547.3"/>
</dbReference>
<dbReference type="RefSeq" id="XP_016878037.1">
    <molecule id="Q05086-3"/>
    <property type="nucleotide sequence ID" value="XM_017022548.3"/>
</dbReference>
<dbReference type="RefSeq" id="XP_016878038.1">
    <property type="nucleotide sequence ID" value="XM_017022549.1"/>
</dbReference>
<dbReference type="RefSeq" id="XP_016878039.1">
    <molecule id="Q05086-3"/>
    <property type="nucleotide sequence ID" value="XM_017022550.3"/>
</dbReference>
<dbReference type="RefSeq" id="XP_016878040.1">
    <property type="nucleotide sequence ID" value="XM_017022551.1"/>
</dbReference>
<dbReference type="RefSeq" id="XP_016878041.1">
    <property type="nucleotide sequence ID" value="XM_017022552.1"/>
</dbReference>
<dbReference type="RefSeq" id="XP_016878042.1">
    <property type="nucleotide sequence ID" value="XM_017022553.1"/>
</dbReference>
<dbReference type="RefSeq" id="XP_016878043.1">
    <property type="nucleotide sequence ID" value="XM_017022554.1"/>
</dbReference>
<dbReference type="RefSeq" id="XP_016878044.1">
    <property type="nucleotide sequence ID" value="XM_017022555.1"/>
</dbReference>
<dbReference type="RefSeq" id="XP_024305811.1">
    <molecule id="Q05086-1"/>
    <property type="nucleotide sequence ID" value="XM_024450043.2"/>
</dbReference>
<dbReference type="RefSeq" id="XP_047288963.1">
    <molecule id="Q05086-1"/>
    <property type="nucleotide sequence ID" value="XM_047433007.1"/>
</dbReference>
<dbReference type="RefSeq" id="XP_047288964.1">
    <molecule id="Q05086-1"/>
    <property type="nucleotide sequence ID" value="XM_047433008.1"/>
</dbReference>
<dbReference type="RefSeq" id="XP_047288965.1">
    <molecule id="Q05086-1"/>
    <property type="nucleotide sequence ID" value="XM_047433009.1"/>
</dbReference>
<dbReference type="RefSeq" id="XP_047288966.1">
    <molecule id="Q05086-1"/>
    <property type="nucleotide sequence ID" value="XM_047433010.1"/>
</dbReference>
<dbReference type="RefSeq" id="XP_047288967.1">
    <molecule id="Q05086-3"/>
    <property type="nucleotide sequence ID" value="XM_047433011.1"/>
</dbReference>
<dbReference type="RefSeq" id="XP_047288968.1">
    <molecule id="Q05086-3"/>
    <property type="nucleotide sequence ID" value="XM_047433012.1"/>
</dbReference>
<dbReference type="RefSeq" id="XP_047288969.1">
    <molecule id="Q05086-3"/>
    <property type="nucleotide sequence ID" value="XM_047433013.1"/>
</dbReference>
<dbReference type="RefSeq" id="XP_047288970.1">
    <molecule id="Q05086-3"/>
    <property type="nucleotide sequence ID" value="XM_047433014.1"/>
</dbReference>
<dbReference type="RefSeq" id="XP_047288971.1">
    <molecule id="Q05086-3"/>
    <property type="nucleotide sequence ID" value="XM_047433015.1"/>
</dbReference>
<dbReference type="RefSeq" id="XP_047288972.1">
    <molecule id="Q05086-2"/>
    <property type="nucleotide sequence ID" value="XM_047433016.1"/>
</dbReference>
<dbReference type="RefSeq" id="XP_047288973.1">
    <molecule id="Q05086-2"/>
    <property type="nucleotide sequence ID" value="XM_047433017.1"/>
</dbReference>
<dbReference type="RefSeq" id="XP_047288974.1">
    <molecule id="Q05086-2"/>
    <property type="nucleotide sequence ID" value="XM_047433018.1"/>
</dbReference>
<dbReference type="RefSeq" id="XP_047288975.1">
    <molecule id="Q05086-2"/>
    <property type="nucleotide sequence ID" value="XM_047433019.1"/>
</dbReference>
<dbReference type="RefSeq" id="XP_054234720.1">
    <molecule id="Q05086-1"/>
    <property type="nucleotide sequence ID" value="XM_054378745.1"/>
</dbReference>
<dbReference type="RefSeq" id="XP_054234721.1">
    <molecule id="Q05086-1"/>
    <property type="nucleotide sequence ID" value="XM_054378746.1"/>
</dbReference>
<dbReference type="RefSeq" id="XP_054234722.1">
    <molecule id="Q05086-1"/>
    <property type="nucleotide sequence ID" value="XM_054378747.1"/>
</dbReference>
<dbReference type="RefSeq" id="XP_054234723.1">
    <molecule id="Q05086-1"/>
    <property type="nucleotide sequence ID" value="XM_054378748.1"/>
</dbReference>
<dbReference type="RefSeq" id="XP_054234724.1">
    <molecule id="Q05086-1"/>
    <property type="nucleotide sequence ID" value="XM_054378749.1"/>
</dbReference>
<dbReference type="RefSeq" id="XP_054234725.1">
    <molecule id="Q05086-1"/>
    <property type="nucleotide sequence ID" value="XM_054378750.1"/>
</dbReference>
<dbReference type="RefSeq" id="XP_054234726.1">
    <molecule id="Q05086-3"/>
    <property type="nucleotide sequence ID" value="XM_054378751.1"/>
</dbReference>
<dbReference type="RefSeq" id="XP_054234727.1">
    <molecule id="Q05086-3"/>
    <property type="nucleotide sequence ID" value="XM_054378752.1"/>
</dbReference>
<dbReference type="RefSeq" id="XP_054234728.1">
    <molecule id="Q05086-3"/>
    <property type="nucleotide sequence ID" value="XM_054378753.1"/>
</dbReference>
<dbReference type="RefSeq" id="XP_054234729.1">
    <molecule id="Q05086-3"/>
    <property type="nucleotide sequence ID" value="XM_054378754.1"/>
</dbReference>
<dbReference type="RefSeq" id="XP_054234730.1">
    <molecule id="Q05086-3"/>
    <property type="nucleotide sequence ID" value="XM_054378755.1"/>
</dbReference>
<dbReference type="RefSeq" id="XP_054234731.1">
    <molecule id="Q05086-3"/>
    <property type="nucleotide sequence ID" value="XM_054378756.1"/>
</dbReference>
<dbReference type="RefSeq" id="XP_054234732.1">
    <molecule id="Q05086-3"/>
    <property type="nucleotide sequence ID" value="XM_054378757.1"/>
</dbReference>
<dbReference type="RefSeq" id="XP_054234733.1">
    <molecule id="Q05086-3"/>
    <property type="nucleotide sequence ID" value="XM_054378758.1"/>
</dbReference>
<dbReference type="RefSeq" id="XP_054234734.1">
    <molecule id="Q05086-2"/>
    <property type="nucleotide sequence ID" value="XM_054378759.1"/>
</dbReference>
<dbReference type="RefSeq" id="XP_054234735.1">
    <molecule id="Q05086-2"/>
    <property type="nucleotide sequence ID" value="XM_054378760.1"/>
</dbReference>
<dbReference type="RefSeq" id="XP_054234736.1">
    <molecule id="Q05086-2"/>
    <property type="nucleotide sequence ID" value="XM_054378761.1"/>
</dbReference>
<dbReference type="RefSeq" id="XP_054234737.1">
    <molecule id="Q05086-2"/>
    <property type="nucleotide sequence ID" value="XM_054378762.1"/>
</dbReference>
<dbReference type="PDB" id="1C4Z">
    <property type="method" value="X-ray"/>
    <property type="resolution" value="2.60 A"/>
    <property type="chains" value="A/B/C=518-875"/>
</dbReference>
<dbReference type="PDB" id="1D5F">
    <property type="method" value="X-ray"/>
    <property type="resolution" value="2.80 A"/>
    <property type="chains" value="A/B/C=518-875"/>
</dbReference>
<dbReference type="PDB" id="1EQX">
    <property type="method" value="NMR"/>
    <property type="chains" value="A=401-418"/>
</dbReference>
<dbReference type="PDB" id="2KR1">
    <property type="method" value="NMR"/>
    <property type="chains" value="A=24-87"/>
</dbReference>
<dbReference type="PDB" id="4GIZ">
    <property type="method" value="X-ray"/>
    <property type="resolution" value="2.55 A"/>
    <property type="chains" value="A/B=403-414"/>
</dbReference>
<dbReference type="PDB" id="4XR8">
    <property type="method" value="X-ray"/>
    <property type="resolution" value="2.25 A"/>
    <property type="chains" value="A/B=406-417"/>
</dbReference>
<dbReference type="PDB" id="6SJV">
    <property type="method" value="X-ray"/>
    <property type="resolution" value="2.03 A"/>
    <property type="chains" value="A=403-417"/>
</dbReference>
<dbReference type="PDB" id="6SLM">
    <property type="method" value="X-ray"/>
    <property type="resolution" value="2.80 A"/>
    <property type="chains" value="A=403-417"/>
</dbReference>
<dbReference type="PDB" id="6TGK">
    <property type="method" value="X-ray"/>
    <property type="resolution" value="1.30 A"/>
    <property type="chains" value="C=765-869"/>
</dbReference>
<dbReference type="PDB" id="6U19">
    <property type="method" value="NMR"/>
    <property type="chains" value="B=24-87"/>
</dbReference>
<dbReference type="PDB" id="7Q41">
    <property type="method" value="X-ray"/>
    <property type="resolution" value="3.01 A"/>
    <property type="chains" value="B/D/F=183-197"/>
</dbReference>
<dbReference type="PDB" id="7QPB">
    <property type="method" value="X-ray"/>
    <property type="resolution" value="2.34 A"/>
    <property type="chains" value="A/B/C/D=764-875"/>
</dbReference>
<dbReference type="PDB" id="8ENP">
    <property type="method" value="NMR"/>
    <property type="chains" value="A=10-87"/>
</dbReference>
<dbReference type="PDB" id="8EPT">
    <property type="method" value="NMR"/>
    <property type="chains" value="A=1-87"/>
</dbReference>
<dbReference type="PDB" id="8GCR">
    <property type="method" value="EM"/>
    <property type="resolution" value="3.38 A"/>
    <property type="chains" value="R=1-875"/>
</dbReference>
<dbReference type="PDB" id="8JRN">
    <property type="method" value="EM"/>
    <property type="resolution" value="2.60 A"/>
    <property type="chains" value="A/C=1-875"/>
</dbReference>
<dbReference type="PDB" id="8JRO">
    <property type="method" value="EM"/>
    <property type="resolution" value="3.01 A"/>
    <property type="chains" value="A/C=1-875"/>
</dbReference>
<dbReference type="PDB" id="8JRP">
    <property type="method" value="EM"/>
    <property type="resolution" value="3.58 A"/>
    <property type="chains" value="A/C=1-875"/>
</dbReference>
<dbReference type="PDB" id="8JRQ">
    <property type="method" value="EM"/>
    <property type="resolution" value="4.15 A"/>
    <property type="chains" value="A/C=1-875"/>
</dbReference>
<dbReference type="PDB" id="8JRR">
    <property type="method" value="EM"/>
    <property type="resolution" value="4.35 A"/>
    <property type="chains" value="A/C=1-875"/>
</dbReference>
<dbReference type="PDB" id="8R1F">
    <property type="method" value="EM"/>
    <property type="resolution" value="3.67 A"/>
    <property type="chains" value="A=1-875"/>
</dbReference>
<dbReference type="PDB" id="8R1G">
    <property type="method" value="EM"/>
    <property type="resolution" value="3.99 A"/>
    <property type="chains" value="A/D=1-875"/>
</dbReference>
<dbReference type="PDB" id="9CHT">
    <property type="method" value="EM"/>
    <property type="resolution" value="3.54 A"/>
    <property type="chains" value="A=1-875"/>
</dbReference>
<dbReference type="PDBsum" id="1C4Z"/>
<dbReference type="PDBsum" id="1D5F"/>
<dbReference type="PDBsum" id="1EQX"/>
<dbReference type="PDBsum" id="2KR1"/>
<dbReference type="PDBsum" id="4GIZ"/>
<dbReference type="PDBsum" id="4XR8"/>
<dbReference type="PDBsum" id="6SJV"/>
<dbReference type="PDBsum" id="6SLM"/>
<dbReference type="PDBsum" id="6TGK"/>
<dbReference type="PDBsum" id="6U19"/>
<dbReference type="PDBsum" id="7Q41"/>
<dbReference type="PDBsum" id="7QPB"/>
<dbReference type="PDBsum" id="8ENP"/>
<dbReference type="PDBsum" id="8EPT"/>
<dbReference type="PDBsum" id="8GCR"/>
<dbReference type="PDBsum" id="8JRN"/>
<dbReference type="PDBsum" id="8JRO"/>
<dbReference type="PDBsum" id="8JRP"/>
<dbReference type="PDBsum" id="8JRQ"/>
<dbReference type="PDBsum" id="8JRR"/>
<dbReference type="PDBsum" id="8R1F"/>
<dbReference type="PDBsum" id="8R1G"/>
<dbReference type="PDBsum" id="9CHT"/>
<dbReference type="BMRB" id="Q05086"/>
<dbReference type="EMDB" id="EMD-18809"/>
<dbReference type="EMDB" id="EMD-18810"/>
<dbReference type="EMDB" id="EMD-29941"/>
<dbReference type="EMDB" id="EMD-36599"/>
<dbReference type="EMDB" id="EMD-36600"/>
<dbReference type="EMDB" id="EMD-36601"/>
<dbReference type="EMDB" id="EMD-36602"/>
<dbReference type="EMDB" id="EMD-36603"/>
<dbReference type="EMDB" id="EMD-36604"/>
<dbReference type="EMDB" id="EMD-45601"/>
<dbReference type="SMR" id="Q05086"/>
<dbReference type="BioGRID" id="113185">
    <property type="interactions" value="446"/>
</dbReference>
<dbReference type="CORUM" id="Q05086"/>
<dbReference type="DIP" id="DIP-6002N"/>
<dbReference type="FunCoup" id="Q05086">
    <property type="interactions" value="2909"/>
</dbReference>
<dbReference type="IntAct" id="Q05086">
    <property type="interactions" value="192"/>
</dbReference>
<dbReference type="MINT" id="Q05086"/>
<dbReference type="STRING" id="9606.ENSP00000497594"/>
<dbReference type="MoonDB" id="Q05086">
    <property type="type" value="Predicted"/>
</dbReference>
<dbReference type="GlyCosmos" id="Q05086">
    <property type="glycosylation" value="1 site, 2 glycans"/>
</dbReference>
<dbReference type="GlyGen" id="Q05086">
    <property type="glycosylation" value="2 sites, 2 O-linked glycans (2 sites)"/>
</dbReference>
<dbReference type="iPTMnet" id="Q05086"/>
<dbReference type="MetOSite" id="Q05086"/>
<dbReference type="PhosphoSitePlus" id="Q05086"/>
<dbReference type="SwissPalm" id="Q05086"/>
<dbReference type="BioMuta" id="UBE3A"/>
<dbReference type="DMDM" id="215274240"/>
<dbReference type="jPOST" id="Q05086"/>
<dbReference type="MassIVE" id="Q05086"/>
<dbReference type="PaxDb" id="9606-ENSP00000232165"/>
<dbReference type="PeptideAtlas" id="Q05086"/>
<dbReference type="ProteomicsDB" id="58306">
    <molecule id="Q05086-1"/>
</dbReference>
<dbReference type="ProteomicsDB" id="58307">
    <molecule id="Q05086-2"/>
</dbReference>
<dbReference type="ProteomicsDB" id="58308">
    <molecule id="Q05086-3"/>
</dbReference>
<dbReference type="Pumba" id="Q05086"/>
<dbReference type="Antibodypedia" id="9118">
    <property type="antibodies" value="428 antibodies from 37 providers"/>
</dbReference>
<dbReference type="DNASU" id="7337"/>
<dbReference type="Ensembl" id="ENST00000428984.6">
    <molecule id="Q05086-2"/>
    <property type="protein sequence ID" value="ENSP00000401265.2"/>
    <property type="gene ID" value="ENSG00000114062.22"/>
</dbReference>
<dbReference type="Ensembl" id="ENST00000438097.6">
    <molecule id="Q05086-2"/>
    <property type="protein sequence ID" value="ENSP00000411258.1"/>
    <property type="gene ID" value="ENSG00000114062.22"/>
</dbReference>
<dbReference type="Ensembl" id="ENST00000566215.5">
    <molecule id="Q05086-2"/>
    <property type="protein sequence ID" value="ENSP00000457771.1"/>
    <property type="gene ID" value="ENSG00000114062.22"/>
</dbReference>
<dbReference type="Ensembl" id="ENST00000630424.2">
    <molecule id="Q05086-2"/>
    <property type="protein sequence ID" value="ENSP00000486349.1"/>
    <property type="gene ID" value="ENSG00000114062.22"/>
</dbReference>
<dbReference type="Ensembl" id="ENST00000637886.1">
    <molecule id="Q05086-3"/>
    <property type="protein sequence ID" value="ENSP00000490258.1"/>
    <property type="gene ID" value="ENSG00000114062.22"/>
</dbReference>
<dbReference type="Ensembl" id="ENST00000638011.1">
    <molecule id="Q05086-2"/>
    <property type="protein sequence ID" value="ENSP00000490111.1"/>
    <property type="gene ID" value="ENSG00000114062.22"/>
</dbReference>
<dbReference type="Ensembl" id="ENST00000638155.1">
    <molecule id="Q05086-2"/>
    <property type="protein sequence ID" value="ENSP00000490557.1"/>
    <property type="gene ID" value="ENSG00000114062.22"/>
</dbReference>
<dbReference type="Ensembl" id="ENST00000648336.2">
    <molecule id="Q05086-3"/>
    <property type="protein sequence ID" value="ENSP00000497572.2"/>
    <property type="gene ID" value="ENSG00000114062.22"/>
</dbReference>
<dbReference type="Ensembl" id="ENST00000649550.1">
    <molecule id="Q05086-2"/>
    <property type="protein sequence ID" value="ENSP00000497549.1"/>
    <property type="gene ID" value="ENSG00000114062.22"/>
</dbReference>
<dbReference type="Ensembl" id="ENST00000650110.1">
    <molecule id="Q05086-1"/>
    <property type="protein sequence ID" value="ENSP00000497594.1"/>
    <property type="gene ID" value="ENSG00000114062.22"/>
</dbReference>
<dbReference type="GeneID" id="7337"/>
<dbReference type="KEGG" id="hsa:7337"/>
<dbReference type="MANE-Select" id="ENST00000648336.2">
    <molecule id="Q05086-3"/>
    <property type="protein sequence ID" value="ENSP00000497572.2"/>
    <property type="RefSeq nucleotide sequence ID" value="NM_130839.5"/>
    <property type="RefSeq protein sequence ID" value="NP_570854.1"/>
</dbReference>
<dbReference type="UCSC" id="uc001zaq.4">
    <molecule id="Q05086-1"/>
    <property type="organism name" value="human"/>
</dbReference>
<dbReference type="AGR" id="HGNC:12496"/>
<dbReference type="CTD" id="7337"/>
<dbReference type="DisGeNET" id="7337"/>
<dbReference type="GeneCards" id="UBE3A"/>
<dbReference type="GeneReviews" id="UBE3A"/>
<dbReference type="HGNC" id="HGNC:12496">
    <property type="gene designation" value="UBE3A"/>
</dbReference>
<dbReference type="HPA" id="ENSG00000114062">
    <property type="expression patterns" value="Low tissue specificity"/>
</dbReference>
<dbReference type="MalaCards" id="UBE3A"/>
<dbReference type="MIM" id="105830">
    <property type="type" value="phenotype"/>
</dbReference>
<dbReference type="MIM" id="601623">
    <property type="type" value="gene"/>
</dbReference>
<dbReference type="neXtProt" id="NX_Q05086"/>
<dbReference type="OpenTargets" id="ENSG00000114062"/>
<dbReference type="Orphanet" id="238446">
    <property type="disease" value="15q11q13 microduplication syndrome"/>
</dbReference>
<dbReference type="Orphanet" id="411511">
    <property type="disease" value="Angelman syndrome due to a point mutation"/>
</dbReference>
<dbReference type="Orphanet" id="411515">
    <property type="disease" value="Angelman syndrome due to imprinting defect in 15q11-q13"/>
</dbReference>
<dbReference type="Orphanet" id="98794">
    <property type="disease" value="Angelman syndrome due to maternal 15q11q13 deletion"/>
</dbReference>
<dbReference type="Orphanet" id="98795">
    <property type="disease" value="Angelman syndrome due to paternal uniparental disomy of chromosome 15"/>
</dbReference>
<dbReference type="PharmGKB" id="PA37144"/>
<dbReference type="VEuPathDB" id="HostDB:ENSG00000114062"/>
<dbReference type="eggNOG" id="KOG0941">
    <property type="taxonomic scope" value="Eukaryota"/>
</dbReference>
<dbReference type="GeneTree" id="ENSGT00940000155050"/>
<dbReference type="InParanoid" id="Q05086"/>
<dbReference type="OMA" id="AHCTNAN"/>
<dbReference type="OrthoDB" id="5981550at2759"/>
<dbReference type="PAN-GO" id="Q05086">
    <property type="GO annotations" value="4 GO annotations based on evolutionary models"/>
</dbReference>
<dbReference type="PhylomeDB" id="Q05086"/>
<dbReference type="TreeFam" id="TF315189"/>
<dbReference type="BRENDA" id="2.3.2.26">
    <property type="organism ID" value="2681"/>
</dbReference>
<dbReference type="PathwayCommons" id="Q05086"/>
<dbReference type="Reactome" id="R-HSA-983168">
    <property type="pathway name" value="Antigen processing: Ubiquitination &amp; Proteasome degradation"/>
</dbReference>
<dbReference type="SignaLink" id="Q05086"/>
<dbReference type="SIGNOR" id="Q05086"/>
<dbReference type="UniPathway" id="UPA00143"/>
<dbReference type="BioGRID-ORCS" id="7337">
    <property type="hits" value="20 hits in 1199 CRISPR screens"/>
</dbReference>
<dbReference type="CD-CODE" id="550E224B">
    <property type="entry name" value="Proteasome condensate"/>
</dbReference>
<dbReference type="CD-CODE" id="8C2F96ED">
    <property type="entry name" value="Centrosome"/>
</dbReference>
<dbReference type="ChiTaRS" id="UBE3A">
    <property type="organism name" value="human"/>
</dbReference>
<dbReference type="EvolutionaryTrace" id="Q05086"/>
<dbReference type="GeneWiki" id="UBE3A"/>
<dbReference type="GenomeRNAi" id="7337"/>
<dbReference type="Pharos" id="Q05086">
    <property type="development level" value="Tbio"/>
</dbReference>
<dbReference type="PRO" id="PR:Q05086"/>
<dbReference type="Proteomes" id="UP000005640">
    <property type="component" value="Chromosome 15"/>
</dbReference>
<dbReference type="RNAct" id="Q05086">
    <property type="molecule type" value="protein"/>
</dbReference>
<dbReference type="Bgee" id="ENSG00000114062">
    <property type="expression patterns" value="Expressed in sperm and 216 other cell types or tissues"/>
</dbReference>
<dbReference type="ExpressionAtlas" id="Q05086">
    <property type="expression patterns" value="baseline and differential"/>
</dbReference>
<dbReference type="GO" id="GO:0005829">
    <property type="term" value="C:cytosol"/>
    <property type="evidence" value="ECO:0000318"/>
    <property type="project" value="GO_Central"/>
</dbReference>
<dbReference type="GO" id="GO:0098978">
    <property type="term" value="C:glutamatergic synapse"/>
    <property type="evidence" value="ECO:0007669"/>
    <property type="project" value="Ensembl"/>
</dbReference>
<dbReference type="GO" id="GO:0005634">
    <property type="term" value="C:nucleus"/>
    <property type="evidence" value="ECO:0007669"/>
    <property type="project" value="UniProtKB-SubCell"/>
</dbReference>
<dbReference type="GO" id="GO:0099524">
    <property type="term" value="C:postsynaptic cytosol"/>
    <property type="evidence" value="ECO:0007669"/>
    <property type="project" value="Ensembl"/>
</dbReference>
<dbReference type="GO" id="GO:0000502">
    <property type="term" value="C:proteasome complex"/>
    <property type="evidence" value="ECO:0007669"/>
    <property type="project" value="UniProtKB-KW"/>
</dbReference>
<dbReference type="GO" id="GO:0008021">
    <property type="term" value="C:synaptic vesicle"/>
    <property type="evidence" value="ECO:0007669"/>
    <property type="project" value="Ensembl"/>
</dbReference>
<dbReference type="GO" id="GO:0003713">
    <property type="term" value="F:transcription coactivator activity"/>
    <property type="evidence" value="ECO:0007669"/>
    <property type="project" value="Ensembl"/>
</dbReference>
<dbReference type="GO" id="GO:0061630">
    <property type="term" value="F:ubiquitin protein ligase activity"/>
    <property type="evidence" value="ECO:0000314"/>
    <property type="project" value="UniProtKB"/>
</dbReference>
<dbReference type="GO" id="GO:0004842">
    <property type="term" value="F:ubiquitin-protein transferase activity"/>
    <property type="evidence" value="ECO:0000314"/>
    <property type="project" value="UniProtKB"/>
</dbReference>
<dbReference type="GO" id="GO:0008270">
    <property type="term" value="F:zinc ion binding"/>
    <property type="evidence" value="ECO:0007669"/>
    <property type="project" value="UniProtKB-KW"/>
</dbReference>
<dbReference type="GO" id="GO:0030521">
    <property type="term" value="P:androgen receptor signaling pathway"/>
    <property type="evidence" value="ECO:0007669"/>
    <property type="project" value="Ensembl"/>
</dbReference>
<dbReference type="GO" id="GO:0007420">
    <property type="term" value="P:brain development"/>
    <property type="evidence" value="ECO:0000304"/>
    <property type="project" value="ProtInc"/>
</dbReference>
<dbReference type="GO" id="GO:1904262">
    <property type="term" value="P:negative regulation of TORC1 signaling"/>
    <property type="evidence" value="ECO:0000250"/>
    <property type="project" value="UniProtKB"/>
</dbReference>
<dbReference type="GO" id="GO:0001541">
    <property type="term" value="P:ovarian follicle development"/>
    <property type="evidence" value="ECO:0007669"/>
    <property type="project" value="Ensembl"/>
</dbReference>
<dbReference type="GO" id="GO:1905528">
    <property type="term" value="P:positive regulation of Golgi lumen acidification"/>
    <property type="evidence" value="ECO:0007669"/>
    <property type="project" value="Ensembl"/>
</dbReference>
<dbReference type="GO" id="GO:0051897">
    <property type="term" value="P:positive regulation of phosphatidylinositol 3-kinase/protein kinase B signal transduction"/>
    <property type="evidence" value="ECO:0007669"/>
    <property type="project" value="Ensembl"/>
</dbReference>
<dbReference type="GO" id="GO:0031398">
    <property type="term" value="P:positive regulation of protein ubiquitination"/>
    <property type="evidence" value="ECO:0000314"/>
    <property type="project" value="CACAO"/>
</dbReference>
<dbReference type="GO" id="GO:0045944">
    <property type="term" value="P:positive regulation of transcription by RNA polymerase II"/>
    <property type="evidence" value="ECO:0007669"/>
    <property type="project" value="Ensembl"/>
</dbReference>
<dbReference type="GO" id="GO:0050847">
    <property type="term" value="P:progesterone receptor signaling pathway"/>
    <property type="evidence" value="ECO:0000314"/>
    <property type="project" value="UniProtKB"/>
</dbReference>
<dbReference type="GO" id="GO:0060736">
    <property type="term" value="P:prostate gland growth"/>
    <property type="evidence" value="ECO:0007669"/>
    <property type="project" value="Ensembl"/>
</dbReference>
<dbReference type="GO" id="GO:0043161">
    <property type="term" value="P:proteasome-mediated ubiquitin-dependent protein catabolic process"/>
    <property type="evidence" value="ECO:0000250"/>
    <property type="project" value="UniProtKB"/>
</dbReference>
<dbReference type="GO" id="GO:0051865">
    <property type="term" value="P:protein autoubiquitination"/>
    <property type="evidence" value="ECO:0000314"/>
    <property type="project" value="FlyBase"/>
</dbReference>
<dbReference type="GO" id="GO:0070936">
    <property type="term" value="P:protein K48-linked ubiquitination"/>
    <property type="evidence" value="ECO:0000314"/>
    <property type="project" value="UniProtKB"/>
</dbReference>
<dbReference type="GO" id="GO:0000209">
    <property type="term" value="P:protein polyubiquitination"/>
    <property type="evidence" value="ECO:0000318"/>
    <property type="project" value="GO_Central"/>
</dbReference>
<dbReference type="GO" id="GO:0006508">
    <property type="term" value="P:proteolysis"/>
    <property type="evidence" value="ECO:0000304"/>
    <property type="project" value="ProtInc"/>
</dbReference>
<dbReference type="GO" id="GO:0042752">
    <property type="term" value="P:regulation of circadian rhythm"/>
    <property type="evidence" value="ECO:0000315"/>
    <property type="project" value="UniProtKB"/>
</dbReference>
<dbReference type="GO" id="GO:0048167">
    <property type="term" value="P:regulation of synaptic plasticity"/>
    <property type="evidence" value="ECO:0000250"/>
    <property type="project" value="UniProtKB"/>
</dbReference>
<dbReference type="GO" id="GO:2000058">
    <property type="term" value="P:regulation of ubiquitin-dependent protein catabolic process"/>
    <property type="evidence" value="ECO:0000315"/>
    <property type="project" value="UniProtKB"/>
</dbReference>
<dbReference type="GO" id="GO:0032570">
    <property type="term" value="P:response to progesterone"/>
    <property type="evidence" value="ECO:0000314"/>
    <property type="project" value="UniProtKB"/>
</dbReference>
<dbReference type="GO" id="GO:0048511">
    <property type="term" value="P:rhythmic process"/>
    <property type="evidence" value="ECO:0007669"/>
    <property type="project" value="UniProtKB-KW"/>
</dbReference>
<dbReference type="GO" id="GO:0035037">
    <property type="term" value="P:sperm entry"/>
    <property type="evidence" value="ECO:0007669"/>
    <property type="project" value="Ensembl"/>
</dbReference>
<dbReference type="GO" id="GO:0006511">
    <property type="term" value="P:ubiquitin-dependent protein catabolic process"/>
    <property type="evidence" value="ECO:0000304"/>
    <property type="project" value="ProtInc"/>
</dbReference>
<dbReference type="CDD" id="cd00078">
    <property type="entry name" value="HECTc"/>
    <property type="match status" value="1"/>
</dbReference>
<dbReference type="FunFam" id="3.90.1750.10:FF:000026">
    <property type="entry name" value="E3 ubiquitin-protein ligase HACE1"/>
    <property type="match status" value="1"/>
</dbReference>
<dbReference type="FunFam" id="3.30.2160.10:FF:000004">
    <property type="entry name" value="probable E3 ubiquitin-protein ligase HERC4 isoform X1"/>
    <property type="match status" value="1"/>
</dbReference>
<dbReference type="FunFam" id="3.30.2410.10:FF:000003">
    <property type="entry name" value="probable E3 ubiquitin-protein ligase HERC4 isoform X1"/>
    <property type="match status" value="1"/>
</dbReference>
<dbReference type="FunFam" id="3.90.1750.10:FF:000008">
    <property type="entry name" value="Putative ubiquitin-protein ligase E3A"/>
    <property type="match status" value="1"/>
</dbReference>
<dbReference type="Gene3D" id="3.30.2160.10">
    <property type="entry name" value="Hect, E3 ligase catalytic domain"/>
    <property type="match status" value="1"/>
</dbReference>
<dbReference type="Gene3D" id="3.30.2410.10">
    <property type="entry name" value="Hect, E3 ligase catalytic domain"/>
    <property type="match status" value="1"/>
</dbReference>
<dbReference type="Gene3D" id="3.90.1750.10">
    <property type="entry name" value="Hect, E3 ligase catalytic domains"/>
    <property type="match status" value="1"/>
</dbReference>
<dbReference type="Gene3D" id="6.10.130.10">
    <property type="entry name" value="Ubiquitin-protein ligase E3A, N-terminal zinc-binding domain (AZUL)"/>
    <property type="match status" value="1"/>
</dbReference>
<dbReference type="IDEAL" id="IID00209"/>
<dbReference type="InterPro" id="IPR032353">
    <property type="entry name" value="AZUL"/>
</dbReference>
<dbReference type="InterPro" id="IPR042556">
    <property type="entry name" value="AZUL_sf"/>
</dbReference>
<dbReference type="InterPro" id="IPR044611">
    <property type="entry name" value="E3A/B/C-like"/>
</dbReference>
<dbReference type="InterPro" id="IPR000569">
    <property type="entry name" value="HECT_dom"/>
</dbReference>
<dbReference type="InterPro" id="IPR035983">
    <property type="entry name" value="Hect_E3_ubiquitin_ligase"/>
</dbReference>
<dbReference type="InterPro" id="IPR017134">
    <property type="entry name" value="UBE3A"/>
</dbReference>
<dbReference type="PANTHER" id="PTHR45700:SF10">
    <property type="entry name" value="UBIQUITIN-PROTEIN LIGASE E3A"/>
    <property type="match status" value="1"/>
</dbReference>
<dbReference type="PANTHER" id="PTHR45700">
    <property type="entry name" value="UBIQUITIN-PROTEIN LIGASE E3C"/>
    <property type="match status" value="1"/>
</dbReference>
<dbReference type="Pfam" id="PF16558">
    <property type="entry name" value="AZUL"/>
    <property type="match status" value="1"/>
</dbReference>
<dbReference type="Pfam" id="PF00632">
    <property type="entry name" value="HECT"/>
    <property type="match status" value="1"/>
</dbReference>
<dbReference type="PIRSF" id="PIRSF037201">
    <property type="entry name" value="Ubiquitin-protein_ligase_E6-AP"/>
    <property type="match status" value="1"/>
</dbReference>
<dbReference type="SMART" id="SM00119">
    <property type="entry name" value="HECTc"/>
    <property type="match status" value="1"/>
</dbReference>
<dbReference type="SUPFAM" id="SSF56204">
    <property type="entry name" value="Hect, E3 ligase catalytic domain"/>
    <property type="match status" value="1"/>
</dbReference>
<dbReference type="PROSITE" id="PS50237">
    <property type="entry name" value="HECT"/>
    <property type="match status" value="1"/>
</dbReference>
<organism>
    <name type="scientific">Homo sapiens</name>
    <name type="common">Human</name>
    <dbReference type="NCBI Taxonomy" id="9606"/>
    <lineage>
        <taxon>Eukaryota</taxon>
        <taxon>Metazoa</taxon>
        <taxon>Chordata</taxon>
        <taxon>Craniata</taxon>
        <taxon>Vertebrata</taxon>
        <taxon>Euteleostomi</taxon>
        <taxon>Mammalia</taxon>
        <taxon>Eutheria</taxon>
        <taxon>Euarchontoglires</taxon>
        <taxon>Primates</taxon>
        <taxon>Haplorrhini</taxon>
        <taxon>Catarrhini</taxon>
        <taxon>Hominidae</taxon>
        <taxon>Homo</taxon>
    </lineage>
</organism>
<protein>
    <recommendedName>
        <fullName>Ubiquitin-protein ligase E3A</fullName>
        <ecNumber evidence="18">2.3.2.26</ecNumber>
    </recommendedName>
    <alternativeName>
        <fullName evidence="28">E6AP ubiquitin-protein ligase</fullName>
    </alternativeName>
    <alternativeName>
        <fullName>HECT-type ubiquitin transferase E3A</fullName>
    </alternativeName>
    <alternativeName>
        <fullName evidence="29">Human papillomavirus E6-associated protein</fullName>
    </alternativeName>
    <alternativeName>
        <fullName evidence="29">Oncogenic protein-associated protein E6-AP</fullName>
    </alternativeName>
    <alternativeName>
        <fullName>Renal carcinoma antigen NY-REN-54</fullName>
    </alternativeName>
</protein>
<name>UBE3A_HUMAN</name>
<evidence type="ECO:0000250" key="1">
    <source>
        <dbReference type="UniProtKB" id="O08759"/>
    </source>
</evidence>
<evidence type="ECO:0000255" key="2">
    <source>
        <dbReference type="PROSITE-ProRule" id="PRU00104"/>
    </source>
</evidence>
<evidence type="ECO:0000256" key="3">
    <source>
        <dbReference type="SAM" id="MobiDB-lite"/>
    </source>
</evidence>
<evidence type="ECO:0000269" key="4">
    <source>
    </source>
</evidence>
<evidence type="ECO:0000269" key="5">
    <source>
    </source>
</evidence>
<evidence type="ECO:0000269" key="6">
    <source>
    </source>
</evidence>
<evidence type="ECO:0000269" key="7">
    <source>
    </source>
</evidence>
<evidence type="ECO:0000269" key="8">
    <source>
    </source>
</evidence>
<evidence type="ECO:0000269" key="9">
    <source>
    </source>
</evidence>
<evidence type="ECO:0000269" key="10">
    <source>
    </source>
</evidence>
<evidence type="ECO:0000269" key="11">
    <source>
    </source>
</evidence>
<evidence type="ECO:0000269" key="12">
    <source>
    </source>
</evidence>
<evidence type="ECO:0000269" key="13">
    <source>
    </source>
</evidence>
<evidence type="ECO:0000269" key="14">
    <source>
    </source>
</evidence>
<evidence type="ECO:0000269" key="15">
    <source>
    </source>
</evidence>
<evidence type="ECO:0000269" key="16">
    <source>
    </source>
</evidence>
<evidence type="ECO:0000269" key="17">
    <source>
    </source>
</evidence>
<evidence type="ECO:0000269" key="18">
    <source>
    </source>
</evidence>
<evidence type="ECO:0000269" key="19">
    <source>
    </source>
</evidence>
<evidence type="ECO:0000269" key="20">
    <source>
    </source>
</evidence>
<evidence type="ECO:0000269" key="21">
    <source>
    </source>
</evidence>
<evidence type="ECO:0000269" key="22">
    <source>
    </source>
</evidence>
<evidence type="ECO:0000269" key="23">
    <source>
    </source>
</evidence>
<evidence type="ECO:0000269" key="24">
    <source>
    </source>
</evidence>
<evidence type="ECO:0000269" key="25">
    <source>
    </source>
</evidence>
<evidence type="ECO:0000269" key="26">
    <source ref="9"/>
</evidence>
<evidence type="ECO:0000303" key="27">
    <source>
    </source>
</evidence>
<evidence type="ECO:0000303" key="28">
    <source>
    </source>
</evidence>
<evidence type="ECO:0000303" key="29">
    <source>
    </source>
</evidence>
<evidence type="ECO:0000303" key="30">
    <source>
    </source>
</evidence>
<evidence type="ECO:0000303" key="31">
    <source>
    </source>
</evidence>
<evidence type="ECO:0000305" key="32"/>
<evidence type="ECO:0000312" key="33">
    <source>
        <dbReference type="HGNC" id="HGNC:12496"/>
    </source>
</evidence>
<evidence type="ECO:0007744" key="34">
    <source>
    </source>
</evidence>
<evidence type="ECO:0007744" key="35">
    <source>
    </source>
</evidence>
<evidence type="ECO:0007829" key="36">
    <source>
        <dbReference type="PDB" id="1C4Z"/>
    </source>
</evidence>
<evidence type="ECO:0007829" key="37">
    <source>
        <dbReference type="PDB" id="2KR1"/>
    </source>
</evidence>
<evidence type="ECO:0007829" key="38">
    <source>
        <dbReference type="PDB" id="6SJV"/>
    </source>
</evidence>
<evidence type="ECO:0007829" key="39">
    <source>
        <dbReference type="PDB" id="6TGK"/>
    </source>
</evidence>
<evidence type="ECO:0007829" key="40">
    <source>
        <dbReference type="PDB" id="7QPB"/>
    </source>
</evidence>
<evidence type="ECO:0007829" key="41">
    <source>
        <dbReference type="PDB" id="8ENP"/>
    </source>
</evidence>
<evidence type="ECO:0007829" key="42">
    <source>
        <dbReference type="PDB" id="8EPT"/>
    </source>
</evidence>
<evidence type="ECO:0007829" key="43">
    <source>
        <dbReference type="PDB" id="8GCR"/>
    </source>
</evidence>
<comment type="function">
    <text evidence="1 4 8 10 11 12 13 16 18 19 21">E3 ubiquitin-protein ligase which accepts ubiquitin from an E2 ubiquitin-conjugating enzyme in the form of a thioester and transfers it to its substrates (PubMed:10373495, PubMed:16772533, PubMed:19204938, PubMed:19233847, PubMed:19325566, PubMed:19591933, PubMed:22645313, PubMed:24273172, PubMed:24728990, PubMed:30020076). Several substrates have been identified including the BMAL1, ARC, LAMTOR1, RAD23A and RAD23B, MCM7 (which is involved in DNA replication), annexin A1, the PML tumor suppressor, and the cell cycle regulator CDKN1B (PubMed:10373495, PubMed:19204938, PubMed:19325566, PubMed:19591933, PubMed:22645313, PubMed:24728990, PubMed:30020076). Additionally, may function as a cellular quality control ubiquitin ligase by helping the degradation of the cytoplasmic misfolded proteins (PubMed:19233847). Finally, UBE3A also promotes its own degradation in vivo. Plays an important role in the regulation of the circadian clock: involved in the ubiquitination of the core clock component BMAL1, leading to its proteasomal degradation (PubMed:24728990). Acts as transcriptional coactivator of progesterone receptor PGR upon progesterone hormone activation (PubMed:16772533). Acts as a regulator of synaptic development by mediating ubiquitination and degradation of ARC (By similarity). Required for synaptic remodeling in neurons by mediating ubiquitination and degradation of LAMTOR1, thereby limiting mTORC1 signaling and activity-dependent synaptic remodeling (By similarity). Synergizes with WBP2 in enhancing PGR activity (PubMed:16772533).</text>
</comment>
<comment type="function">
    <text evidence="22">(Microbial infection) Catalyzes the high-risk human papilloma virus E6-mediated ubiquitination of p53/TP53, contributing to the neoplastic progression of cells infected by these viruses.</text>
</comment>
<comment type="catalytic activity">
    <reaction evidence="18">
        <text>S-ubiquitinyl-[E2 ubiquitin-conjugating enzyme]-L-cysteine + [acceptor protein]-L-lysine = [E2 ubiquitin-conjugating enzyme]-L-cysteine + N(6)-ubiquitinyl-[acceptor protein]-L-lysine.</text>
        <dbReference type="EC" id="2.3.2.26"/>
    </reaction>
</comment>
<comment type="pathway">
    <text evidence="18">Protein modification; protein ubiquitination.</text>
</comment>
<comment type="subunit">
    <text evidence="1 5 6 7 8 9 14 16 18 19">The active form is probably a homotrimer. Binds UBQLN1 and UBQLN2. Interacts with the 26S proteasome. Interacts with BPY2. Interacts with HIF1AN, MAPK6 and NEURL4; interaction with MAPK6 may be mediated by NEURL4. Interacts with the proteasomal subunit PSMD4. Interacts with ESR1 and WBP2 (PubMed:16772533, PubMed:21642474). Interacts with BMAL1 (PubMed:24728990). Interacts with ARC (By similarity).</text>
</comment>
<comment type="subunit">
    <text evidence="9">(Microbial infection) Interacts with HCV core protein and targets it to degradation.</text>
</comment>
<comment type="subunit">
    <text evidence="9">(Microbial infection) Interacts with the E6 protein of the cancer-associated human papillomavirus types 16 and 18. The E6/E6-AP complex binds to and targets the p53/TP53 tumor-suppressor protein for ubiquitin-mediated proteolysis.</text>
</comment>
<comment type="interaction">
    <interactant intactId="EBI-954357">
        <id>Q05086</id>
    </interactant>
    <interactant intactId="EBI-374900">
        <id>Q14566</id>
        <label>MCM6</label>
    </interactant>
    <organismsDiffer>false</organismsDiffer>
    <experiments>6</experiments>
</comment>
<comment type="interaction">
    <interactant intactId="EBI-954357">
        <id>Q05086</id>
    </interactant>
    <interactant intactId="EBI-2684075">
        <id>Q06413</id>
        <label>MEF2C</label>
    </interactant>
    <organismsDiffer>false</organismsDiffer>
    <experiments>3</experiments>
</comment>
<comment type="interaction">
    <interactant intactId="EBI-954357">
        <id>Q05086</id>
    </interactant>
    <interactant intactId="EBI-1642839">
        <id>Q08J23</id>
        <label>NSUN2</label>
    </interactant>
    <organismsDiffer>false</organismsDiffer>
    <experiments>2</experiments>
</comment>
<comment type="interaction">
    <interactant intactId="EBI-954357">
        <id>Q05086</id>
    </interactant>
    <interactant intactId="EBI-359318">
        <id>P55036</id>
        <label>PSMD4</label>
    </interactant>
    <organismsDiffer>false</organismsDiffer>
    <experiments>5</experiments>
</comment>
<comment type="interaction">
    <interactant intactId="EBI-954357">
        <id>Q05086</id>
    </interactant>
    <interactant intactId="EBI-12046643">
        <id>P17735</id>
        <label>TAT</label>
    </interactant>
    <organismsDiffer>false</organismsDiffer>
    <experiments>3</experiments>
</comment>
<comment type="interaction">
    <interactant intactId="EBI-954357">
        <id>Q05086</id>
    </interactant>
    <interactant intactId="EBI-366083">
        <id>P04637</id>
        <label>TP53</label>
    </interactant>
    <organismsDiffer>false</organismsDiffer>
    <experiments>6</experiments>
</comment>
<comment type="interaction">
    <interactant intactId="EBI-954357">
        <id>Q05086</id>
    </interactant>
    <interactant intactId="EBI-1177242">
        <id>P03126</id>
        <label>E6</label>
    </interactant>
    <organismsDiffer>true</organismsDiffer>
    <experiments>10</experiments>
</comment>
<comment type="interaction">
    <interactant intactId="EBI-954357">
        <id>Q05086</id>
    </interactant>
    <interactant intactId="EBI-1177232">
        <id>P04019</id>
        <label>E6</label>
    </interactant>
    <organismsDiffer>true</organismsDiffer>
    <experiments>5</experiments>
</comment>
<comment type="interaction">
    <interactant intactId="EBI-954357">
        <id>Q05086</id>
    </interactant>
    <interactant intactId="EBI-7069993">
        <id>P06462</id>
        <label>E6</label>
    </interactant>
    <organismsDiffer>true</organismsDiffer>
    <experiments>2</experiments>
</comment>
<comment type="interaction">
    <interactant intactId="EBI-954357">
        <id>Q05086</id>
    </interactant>
    <interactant intactId="EBI-1186926">
        <id>P06463</id>
        <label>E6</label>
    </interactant>
    <organismsDiffer>true</organismsDiffer>
    <experiments>7</experiments>
</comment>
<comment type="interaction">
    <interactant intactId="EBI-954357">
        <id>Q05086</id>
    </interactant>
    <interactant intactId="EBI-7281937">
        <id>P06931</id>
        <label>E6</label>
    </interactant>
    <organismsDiffer>true</organismsDiffer>
    <experiments>2</experiments>
</comment>
<comment type="interaction">
    <interactant intactId="EBI-954357">
        <id>Q05086</id>
    </interactant>
    <interactant intactId="EBI-7363822">
        <id>P36799</id>
        <label>E6</label>
    </interactant>
    <organismsDiffer>true</organismsDiffer>
    <experiments>2</experiments>
</comment>
<comment type="interaction">
    <interactant intactId="EBI-954357">
        <id>Q05086</id>
    </interactant>
    <interactant intactId="EBI-7011359">
        <id>Q77E16</id>
        <label>E6</label>
    </interactant>
    <organismsDiffer>true</organismsDiffer>
    <experiments>3</experiments>
</comment>
<comment type="interaction">
    <interactant intactId="EBI-10175863">
        <id>Q05086-2</id>
    </interactant>
    <interactant intactId="EBI-720250">
        <id>Q9NZD4</id>
        <label>AHSP</label>
    </interactant>
    <organismsDiffer>false</organismsDiffer>
    <experiments>3</experiments>
</comment>
<comment type="interaction">
    <interactant intactId="EBI-10175863">
        <id>Q05086-2</id>
    </interactant>
    <interactant intactId="EBI-2609717">
        <id>Q8TDY4</id>
        <label>ASAP3</label>
    </interactant>
    <organismsDiffer>false</organismsDiffer>
    <experiments>3</experiments>
</comment>
<comment type="interaction">
    <interactant intactId="EBI-10175863">
        <id>Q05086-2</id>
    </interactant>
    <interactant intactId="EBI-727146">
        <id>Q7Z3C6</id>
        <label>ATG9A</label>
    </interactant>
    <organismsDiffer>false</organismsDiffer>
    <experiments>3</experiments>
</comment>
<comment type="interaction">
    <interactant intactId="EBI-10175863">
        <id>Q05086-2</id>
    </interactant>
    <interactant intactId="EBI-353741">
        <id>Q99613</id>
        <label>EIF3C</label>
    </interactant>
    <organismsDiffer>false</organismsDiffer>
    <experiments>2</experiments>
</comment>
<comment type="interaction">
    <interactant intactId="EBI-10175863">
        <id>Q05086-2</id>
    </interactant>
    <interactant intactId="EBI-1058922">
        <id>O95714</id>
        <label>HERC2</label>
    </interactant>
    <organismsDiffer>false</organismsDiffer>
    <experiments>5</experiments>
</comment>
<comment type="interaction">
    <interactant intactId="EBI-10175863">
        <id>Q05086-2</id>
    </interactant>
    <interactant intactId="EBI-6426443">
        <id>Q2WGJ6</id>
        <label>KLHL38</label>
    </interactant>
    <organismsDiffer>false</organismsDiffer>
    <experiments>3</experiments>
</comment>
<comment type="interaction">
    <interactant intactId="EBI-10175863">
        <id>Q05086-2</id>
    </interactant>
    <interactant intactId="EBI-374900">
        <id>Q14566</id>
        <label>MCM6</label>
    </interactant>
    <organismsDiffer>false</organismsDiffer>
    <experiments>3</experiments>
</comment>
<comment type="interaction">
    <interactant intactId="EBI-10175863">
        <id>Q05086-2</id>
    </interactant>
    <interactant intactId="EBI-359318">
        <id>P55036</id>
        <label>PSMD4</label>
    </interactant>
    <organismsDiffer>false</organismsDiffer>
    <experiments>3</experiments>
</comment>
<comment type="interaction">
    <interactant intactId="EBI-10175863">
        <id>Q05086-2</id>
    </interactant>
    <interactant intactId="EBI-10223561">
        <id>A1L4G7</id>
        <label>TAT</label>
    </interactant>
    <organismsDiffer>false</organismsDiffer>
    <experiments>3</experiments>
</comment>
<comment type="interaction">
    <interactant intactId="EBI-10175863">
        <id>Q05086-2</id>
    </interactant>
    <interactant intactId="EBI-1642104">
        <id>Q5U5U6</id>
        <label>UBB</label>
    </interactant>
    <organismsDiffer>false</organismsDiffer>
    <experiments>3</experiments>
</comment>
<comment type="interaction">
    <interactant intactId="EBI-10175863">
        <id>Q05086-2</id>
    </interactant>
    <interactant intactId="EBI-10175860">
        <id>B3KPL7</id>
    </interactant>
    <organismsDiffer>false</organismsDiffer>
    <experiments>3</experiments>
</comment>
<comment type="interaction">
    <interactant intactId="EBI-11026619">
        <id>Q05086-3</id>
    </interactant>
    <interactant intactId="EBI-715695">
        <id>O75874</id>
        <label>IDH1</label>
    </interactant>
    <organismsDiffer>false</organismsDiffer>
    <experiments>3</experiments>
</comment>
<comment type="interaction">
    <interactant intactId="EBI-11026619">
        <id>Q05086-3</id>
    </interactant>
    <interactant intactId="EBI-5235902">
        <id>Q9Y4F3</id>
        <label>MARF1</label>
    </interactant>
    <organismsDiffer>false</organismsDiffer>
    <experiments>3</experiments>
</comment>
<comment type="interaction">
    <interactant intactId="EBI-11026619">
        <id>Q05086-3</id>
    </interactant>
    <interactant intactId="EBI-13644623">
        <id>Q92570</id>
        <label>NR4A3</label>
    </interactant>
    <organismsDiffer>false</organismsDiffer>
    <experiments>3</experiments>
</comment>
<comment type="interaction">
    <interactant intactId="EBI-11026619">
        <id>Q05086-3</id>
    </interactant>
    <interactant intactId="EBI-17589229">
        <id>Q6NTF9-3</id>
        <label>RHBDD2</label>
    </interactant>
    <organismsDiffer>false</organismsDiffer>
    <experiments>3</experiments>
</comment>
<comment type="interaction">
    <interactant intactId="EBI-11026619">
        <id>Q05086-3</id>
    </interactant>
    <interactant intactId="EBI-1760638">
        <id>Q92966</id>
        <label>SNAPC3</label>
    </interactant>
    <organismsDiffer>false</organismsDiffer>
    <experiments>3</experiments>
</comment>
<comment type="interaction">
    <interactant intactId="EBI-11026619">
        <id>Q05086-3</id>
    </interactant>
    <interactant intactId="EBI-12046643">
        <id>P17735</id>
        <label>TAT</label>
    </interactant>
    <organismsDiffer>false</organismsDiffer>
    <experiments>11</experiments>
</comment>
<comment type="interaction">
    <interactant intactId="EBI-11026619">
        <id>Q05086-3</id>
    </interactant>
    <interactant intactId="EBI-8638294">
        <id>Q9NUH8</id>
        <label>TMEM14B</label>
    </interactant>
    <organismsDiffer>false</organismsDiffer>
    <experiments>3</experiments>
</comment>
<comment type="interaction">
    <interactant intactId="EBI-11026619">
        <id>Q05086-3</id>
    </interactant>
    <interactant intactId="EBI-3390054">
        <id>P0CG48</id>
        <label>UBC</label>
    </interactant>
    <organismsDiffer>false</organismsDiffer>
    <experiments>3</experiments>
</comment>
<comment type="interaction">
    <interactant intactId="EBI-11026619">
        <id>Q05086-3</id>
    </interactant>
    <interactant intactId="EBI-18894179">
        <id>A0A2K7P776</id>
    </interactant>
    <organismsDiffer>false</organismsDiffer>
    <experiments>3</experiments>
</comment>
<comment type="subcellular location">
    <subcellularLocation>
        <location evidence="1">Cytoplasm</location>
    </subcellularLocation>
    <subcellularLocation>
        <location evidence="1">Nucleus</location>
    </subcellularLocation>
</comment>
<comment type="alternative products">
    <event type="alternative splicing"/>
    <isoform>
        <id>Q05086-1</id>
        <name>II</name>
        <sequence type="displayed"/>
    </isoform>
    <isoform>
        <id>Q05086-2</id>
        <name>I</name>
        <sequence type="described" ref="VSP_006705"/>
    </isoform>
    <isoform>
        <id>Q05086-3</id>
        <name>III</name>
        <sequence type="described" ref="VSP_006706"/>
    </isoform>
</comment>
<comment type="PTM">
    <text evidence="17">Phosphorylation at Tyr-659 by ABL1 impairs E3 ligase activity and protects p53/TP53 from degradation in (HPV)-infected cells.</text>
</comment>
<comment type="disease" evidence="20 25">
    <disease id="DI-00121">
        <name>Angelman syndrome</name>
        <acronym>AS</acronym>
        <description>A neurodevelopmental disorder characterized by severe motor and intellectual retardation, ataxia, frequent jerky limb movements and flapping of the arms and hands, hypotonia, seizures, absence of speech, frequent smiling and episodes of paroxysmal laughter, open-mouthed expression revealing the tongue.</description>
        <dbReference type="MIM" id="105830"/>
    </disease>
    <text>The disease is caused by variants affecting the gene represented in this entry.</text>
</comment>
<comment type="miscellaneous">
    <text>A cysteine residue is required for ubiquitin-thioester formation.</text>
</comment>
<comment type="online information" name="Atlas of Genetics and Cytogenetics in Oncology and Haematology">
    <link uri="https://atlasgeneticsoncology.org/gene/42756/UBE3A"/>
</comment>
<accession>Q05086</accession>
<accession>A8K8Z9</accession>
<accession>P78355</accession>
<accession>Q93066</accession>
<accession>Q9UEP4</accession>
<accession>Q9UEP5</accession>
<accession>Q9UEP6</accession>
<accession>Q9UEP7</accession>
<accession>Q9UEP8</accession>
<accession>Q9UEP9</accession>
<proteinExistence type="evidence at protein level"/>
<keyword id="KW-0002">3D-structure</keyword>
<keyword id="KW-0025">Alternative splicing</keyword>
<keyword id="KW-0090">Biological rhythms</keyword>
<keyword id="KW-0963">Cytoplasm</keyword>
<keyword id="KW-0903">Direct protein sequencing</keyword>
<keyword id="KW-0225">Disease variant</keyword>
<keyword id="KW-0945">Host-virus interaction</keyword>
<keyword id="KW-0479">Metal-binding</keyword>
<keyword id="KW-0539">Nucleus</keyword>
<keyword id="KW-0597">Phosphoprotein</keyword>
<keyword id="KW-0647">Proteasome</keyword>
<keyword id="KW-1267">Proteomics identification</keyword>
<keyword id="KW-1185">Reference proteome</keyword>
<keyword id="KW-0808">Transferase</keyword>
<keyword id="KW-0833">Ubl conjugation pathway</keyword>
<keyword id="KW-0862">Zinc</keyword>
<keyword id="KW-0863">Zinc-finger</keyword>
<feature type="chain" id="PRO_0000194980" description="Ubiquitin-protein ligase E3A">
    <location>
        <begin position="1"/>
        <end position="875"/>
    </location>
</feature>
<feature type="domain" description="HECT" evidence="2">
    <location>
        <begin position="776"/>
        <end position="875"/>
    </location>
</feature>
<feature type="zinc finger region" description="C4-type; atypical" evidence="15">
    <location>
        <begin position="44"/>
        <end position="83"/>
    </location>
</feature>
<feature type="region of interest" description="Disordered" evidence="3">
    <location>
        <begin position="175"/>
        <end position="226"/>
    </location>
</feature>
<feature type="region of interest" description="E6-binding">
    <location>
        <begin position="401"/>
        <end position="418"/>
    </location>
</feature>
<feature type="region of interest" description="Interaction with HCV core protein">
    <location>
        <begin position="418"/>
        <end position="517"/>
    </location>
</feature>
<feature type="compositionally biased region" description="Basic and acidic residues" evidence="3">
    <location>
        <begin position="175"/>
        <end position="186"/>
    </location>
</feature>
<feature type="compositionally biased region" description="Polar residues" evidence="3">
    <location>
        <begin position="213"/>
        <end position="225"/>
    </location>
</feature>
<feature type="active site" description="Glycyl thioester intermediate">
    <location>
        <position position="843"/>
    </location>
</feature>
<feature type="modified residue" description="Phosphoserine" evidence="34 35">
    <location>
        <position position="218"/>
    </location>
</feature>
<feature type="modified residue" description="Phosphotyrosine; by ABL1" evidence="17">
    <location>
        <position position="659"/>
    </location>
</feature>
<feature type="splice variant" id="VSP_006705" description="In isoform I." evidence="30 31">
    <location>
        <begin position="1"/>
        <end position="23"/>
    </location>
</feature>
<feature type="splice variant" id="VSP_006706" description="In isoform III." evidence="27 31">
    <original>MEKLHQCYWK</original>
    <variation>MATACKR</variation>
    <location>
        <begin position="1"/>
        <end position="10"/>
    </location>
</feature>
<feature type="sequence variant" id="VAR_007852" evidence="23">
    <original>C</original>
    <variation>Y</variation>
    <location>
        <position position="44"/>
    </location>
</feature>
<feature type="sequence variant" id="VAR_008142" description="In dbSNP:rs587784511." evidence="25">
    <original>R</original>
    <variation>H</variation>
    <location>
        <position position="62"/>
    </location>
</feature>
<feature type="sequence variant" id="VAR_073196" description="In AS; uncertain significance; dbSNP:rs587781241." evidence="20">
    <original>T</original>
    <variation>K</variation>
    <location>
        <position position="129"/>
    </location>
</feature>
<feature type="sequence variant" id="VAR_073197" description="May be associated with AS; dbSNP:rs587782907." evidence="20">
    <original>C</original>
    <variation>R</variation>
    <location>
        <position position="140"/>
    </location>
</feature>
<feature type="sequence variant" id="VAR_073198" description="May be associated with AS; dbSNP:rs587782915." evidence="20">
    <original>V</original>
    <variation>G</variation>
    <location>
        <position position="156"/>
    </location>
</feature>
<feature type="sequence variant" id="VAR_007853" description="In dbSNP:rs147145506." evidence="23 25">
    <original>A</original>
    <variation>T</variation>
    <location>
        <position position="201"/>
    </location>
</feature>
<feature type="sequence variant" id="VAR_073199" description="In AS; uncertain significance; dbSNP:rs587780581." evidence="20">
    <original>D</original>
    <variation>V</variation>
    <location>
        <position position="235"/>
    </location>
</feature>
<feature type="sequence variant" id="VAR_073200" description="In AS; uncertain significance; dbSNP:rs587780582." evidence="20">
    <original>L</original>
    <variation>H</variation>
    <location>
        <position position="260"/>
    </location>
</feature>
<feature type="sequence variant" id="VAR_073201" description="In AS; uncertain significance." evidence="20">
    <original>L</original>
    <variation>Q</variation>
    <location>
        <position position="260"/>
    </location>
</feature>
<feature type="sequence variant" id="VAR_073202" description="In AS; uncertain significance; dbSNP:rs587780583." evidence="20">
    <original>L</original>
    <variation>W</variation>
    <location>
        <position position="286"/>
    </location>
</feature>
<feature type="sequence variant" id="VAR_047516" description="In dbSNP:rs1059383." evidence="22 24 26">
    <original>V</original>
    <variation>G</variation>
    <location>
        <position position="290"/>
    </location>
</feature>
<feature type="sequence variant" id="VAR_073203" description="May be associated with AS; dbSNP:rs587782908." evidence="20">
    <original>N</original>
    <variation>T</variation>
    <location>
        <position position="293"/>
    </location>
</feature>
<feature type="sequence variant" id="VAR_073204" description="May be associated with AS; dbSNP:rs141984760." evidence="20">
    <original>S</original>
    <variation>T</variation>
    <location>
        <position position="358"/>
    </location>
</feature>
<feature type="sequence variant" id="VAR_008143" evidence="25">
    <original>S</original>
    <variation>P</variation>
    <location>
        <position position="372"/>
    </location>
</feature>
<feature type="sequence variant" id="VAR_073205" description="In AS; uncertain significance; dbSNP:rs587781242." evidence="20">
    <original>L</original>
    <variation>P</variation>
    <location>
        <position position="458"/>
    </location>
</feature>
<feature type="sequence variant" id="VAR_073206" description="In AS; uncertain significance; dbSNP:rs587780584." evidence="20">
    <original>P</original>
    <variation>L</variation>
    <location>
        <position position="481"/>
    </location>
</feature>
<feature type="sequence variant" id="VAR_073207" description="In AS; uncertain significance; dbSNP:rs587781243." evidence="20">
    <original>R</original>
    <variation>P</variation>
    <location>
        <position position="500"/>
    </location>
</feature>
<feature type="sequence variant" id="VAR_073208" description="May be associated with AS; dbSNP:rs587782916." evidence="20">
    <original>M</original>
    <variation>I</variation>
    <location>
        <position position="501"/>
    </location>
</feature>
<feature type="sequence variant" id="VAR_073209" description="In AS; uncertain significance; dbSNP:rs587781233." evidence="20">
    <original>G</original>
    <variation>R</variation>
    <location>
        <position position="568"/>
    </location>
</feature>
<feature type="sequence variant" id="VAR_073210" description="In AS; uncertain significance; dbSNP:rs587781244." evidence="20">
    <original>M</original>
    <variation>K</variation>
    <location>
        <position position="589"/>
    </location>
</feature>
<feature type="sequence variant" id="VAR_073211" description="In AS; uncertain significance; dbSNP:rs587781235." evidence="20">
    <original>E</original>
    <variation>Q</variation>
    <location>
        <position position="607"/>
    </location>
</feature>
<feature type="sequence variant" id="VAR_073212" description="May be associated with AS; dbSNP:rs587782918." evidence="20">
    <original>Q</original>
    <variation>E</variation>
    <location>
        <position position="611"/>
    </location>
</feature>
<feature type="sequence variant" id="VAR_073213" description="May be associated with AS; dbSNP:rs587782919." evidence="20">
    <original>Q</original>
    <variation>P</variation>
    <location>
        <position position="611"/>
    </location>
</feature>
<feature type="sequence variant" id="VAR_073214" description="In AS; uncertain significance; dbSNP:rs587781236." evidence="20">
    <original>T</original>
    <variation>I</variation>
    <location>
        <position position="679"/>
    </location>
</feature>
<feature type="sequence variant" id="VAR_073215" description="May be associated with AS; dbSNP:rs587782920." evidence="20">
    <original>L</original>
    <variation>R</variation>
    <location>
        <position position="696"/>
    </location>
</feature>
<feature type="sequence variant" id="VAR_073216" description="In AS; uncertain significance; dbSNP:rs587781237." evidence="20">
    <original>F</original>
    <variation>C</variation>
    <location>
        <position position="713"/>
    </location>
</feature>
<feature type="sequence variant" id="VAR_073217" description="May be associated with AS; dbSNP:rs587782910." evidence="20">
    <original>V</original>
    <variation>I</variation>
    <location>
        <position position="785"/>
    </location>
</feature>
<feature type="sequence variant" id="VAR_008144" description="In AS." evidence="25">
    <original>I</original>
    <variation>II</variation>
    <location>
        <position position="826"/>
    </location>
</feature>
<feature type="sequence variant" id="VAR_073218" description="In AS; uncertain significance; dbSNP:rs587781239." evidence="20">
    <original>P</original>
    <variation>L</variation>
    <location>
        <position position="850"/>
    </location>
</feature>
<feature type="mutagenesis site" description="Disrupt trimer formation, 50-fold reduction in E3 ligase activity." evidence="18">
    <original>F</original>
    <variation>D</variation>
    <location>
        <position position="750"/>
    </location>
</feature>
<feature type="sequence conflict" description="In Ref. 7; AA sequence." evidence="32" ref="7">
    <original>R</original>
    <variation>RNLVNEFNSR</variation>
    <location>
        <position position="359"/>
    </location>
</feature>
<feature type="sequence conflict" description="In Ref. 7; AAA35542." evidence="32" ref="7">
    <original>P</original>
    <variation>L</variation>
    <location>
        <position position="423"/>
    </location>
</feature>
<feature type="sequence conflict" description="In Ref. 7; AAA35542." evidence="32" ref="7">
    <original>TFR</original>
    <variation>LFV</variation>
    <location>
        <begin position="647"/>
        <end position="649"/>
    </location>
</feature>
<feature type="sequence conflict" description="In Ref. 7; AAA35542." evidence="32" ref="7">
    <original>E</original>
    <variation>V</variation>
    <location>
        <position position="669"/>
    </location>
</feature>
<feature type="sequence conflict" description="In Ref. 7; AAA35542." evidence="32" ref="7">
    <original>D</original>
    <variation>N</variation>
    <location>
        <position position="686"/>
    </location>
</feature>
<feature type="helix" evidence="42">
    <location>
        <begin position="18"/>
        <end position="25"/>
    </location>
</feature>
<feature type="helix" evidence="37">
    <location>
        <begin position="27"/>
        <end position="41"/>
    </location>
</feature>
<feature type="strand" evidence="42">
    <location>
        <begin position="52"/>
        <end position="54"/>
    </location>
</feature>
<feature type="strand" evidence="41">
    <location>
        <begin position="55"/>
        <end position="57"/>
    </location>
</feature>
<feature type="strand" evidence="42">
    <location>
        <begin position="58"/>
        <end position="60"/>
    </location>
</feature>
<feature type="helix" evidence="37">
    <location>
        <begin position="65"/>
        <end position="78"/>
    </location>
</feature>
<feature type="helix" evidence="43">
    <location>
        <begin position="130"/>
        <end position="142"/>
    </location>
</feature>
<feature type="helix" evidence="43">
    <location>
        <begin position="147"/>
        <end position="156"/>
    </location>
</feature>
<feature type="helix" evidence="43">
    <location>
        <begin position="160"/>
        <end position="165"/>
    </location>
</feature>
<feature type="helix" evidence="38">
    <location>
        <begin position="171"/>
        <end position="180"/>
    </location>
</feature>
<feature type="turn" evidence="38">
    <location>
        <begin position="181"/>
        <end position="183"/>
    </location>
</feature>
<feature type="helix" evidence="38">
    <location>
        <begin position="185"/>
        <end position="194"/>
    </location>
</feature>
<feature type="strand" evidence="38">
    <location>
        <begin position="199"/>
        <end position="203"/>
    </location>
</feature>
<feature type="helix" evidence="38">
    <location>
        <begin position="205"/>
        <end position="208"/>
    </location>
</feature>
<feature type="helix" evidence="38">
    <location>
        <begin position="212"/>
        <end position="219"/>
    </location>
</feature>
<feature type="helix" evidence="38">
    <location>
        <begin position="223"/>
        <end position="226"/>
    </location>
</feature>
<feature type="helix" evidence="38">
    <location>
        <begin position="232"/>
        <end position="247"/>
    </location>
</feature>
<feature type="helix" evidence="38">
    <location>
        <begin position="252"/>
        <end position="259"/>
    </location>
</feature>
<feature type="helix" evidence="43">
    <location>
        <begin position="265"/>
        <end position="271"/>
    </location>
</feature>
<feature type="turn" evidence="43">
    <location>
        <begin position="277"/>
        <end position="279"/>
    </location>
</feature>
<feature type="helix" evidence="43">
    <location>
        <begin position="281"/>
        <end position="288"/>
    </location>
</feature>
<feature type="helix" evidence="43">
    <location>
        <begin position="294"/>
        <end position="296"/>
    </location>
</feature>
<feature type="helix" evidence="43">
    <location>
        <begin position="299"/>
        <end position="301"/>
    </location>
</feature>
<feature type="turn" evidence="43">
    <location>
        <begin position="302"/>
        <end position="304"/>
    </location>
</feature>
<feature type="helix" evidence="43">
    <location>
        <begin position="305"/>
        <end position="314"/>
    </location>
</feature>
<feature type="helix" evidence="43">
    <location>
        <begin position="318"/>
        <end position="329"/>
    </location>
</feature>
<feature type="helix" evidence="43">
    <location>
        <begin position="333"/>
        <end position="353"/>
    </location>
</feature>
<feature type="helix" evidence="43">
    <location>
        <begin position="362"/>
        <end position="364"/>
    </location>
</feature>
<feature type="helix" evidence="43">
    <location>
        <begin position="366"/>
        <end position="385"/>
    </location>
</feature>
<feature type="helix" evidence="38">
    <location>
        <begin position="405"/>
        <end position="412"/>
    </location>
</feature>
<feature type="helix" evidence="43">
    <location>
        <begin position="446"/>
        <end position="449"/>
    </location>
</feature>
<feature type="helix" evidence="43">
    <location>
        <begin position="452"/>
        <end position="455"/>
    </location>
</feature>
<feature type="helix" evidence="43">
    <location>
        <begin position="460"/>
        <end position="468"/>
    </location>
</feature>
<feature type="helix" evidence="43">
    <location>
        <begin position="481"/>
        <end position="483"/>
    </location>
</feature>
<feature type="helix" evidence="43">
    <location>
        <begin position="486"/>
        <end position="513"/>
    </location>
</feature>
<feature type="strand" evidence="36">
    <location>
        <begin position="525"/>
        <end position="527"/>
    </location>
</feature>
<feature type="strand" evidence="36">
    <location>
        <begin position="529"/>
        <end position="531"/>
    </location>
</feature>
<feature type="helix" evidence="36">
    <location>
        <begin position="532"/>
        <end position="545"/>
    </location>
</feature>
<feature type="helix" evidence="36">
    <location>
        <begin position="548"/>
        <end position="552"/>
    </location>
</feature>
<feature type="strand" evidence="36">
    <location>
        <begin position="557"/>
        <end position="559"/>
    </location>
</feature>
<feature type="helix" evidence="36">
    <location>
        <begin position="569"/>
        <end position="582"/>
    </location>
</feature>
<feature type="helix" evidence="36">
    <location>
        <begin position="585"/>
        <end position="587"/>
    </location>
</feature>
<feature type="strand" evidence="36">
    <location>
        <begin position="589"/>
        <end position="592"/>
    </location>
</feature>
<feature type="turn" evidence="36">
    <location>
        <begin position="594"/>
        <end position="596"/>
    </location>
</feature>
<feature type="strand" evidence="36">
    <location>
        <begin position="599"/>
        <end position="601"/>
    </location>
</feature>
<feature type="helix" evidence="36">
    <location>
        <begin position="609"/>
        <end position="624"/>
    </location>
</feature>
<feature type="helix" evidence="36">
    <location>
        <begin position="635"/>
        <end position="641"/>
    </location>
</feature>
<feature type="helix" evidence="36">
    <location>
        <begin position="648"/>
        <end position="654"/>
    </location>
</feature>
<feature type="helix" evidence="36">
    <location>
        <begin position="656"/>
        <end position="667"/>
    </location>
</feature>
<feature type="helix" evidence="36">
    <location>
        <begin position="672"/>
        <end position="675"/>
    </location>
</feature>
<feature type="strand" evidence="36">
    <location>
        <begin position="679"/>
        <end position="684"/>
    </location>
</feature>
<feature type="turn" evidence="36">
    <location>
        <begin position="687"/>
        <end position="689"/>
    </location>
</feature>
<feature type="strand" evidence="36">
    <location>
        <begin position="692"/>
        <end position="697"/>
    </location>
</feature>
<feature type="turn" evidence="36">
    <location>
        <begin position="698"/>
        <end position="702"/>
    </location>
</feature>
<feature type="turn" evidence="36">
    <location>
        <begin position="707"/>
        <end position="709"/>
    </location>
</feature>
<feature type="helix" evidence="36">
    <location>
        <begin position="710"/>
        <end position="722"/>
    </location>
</feature>
<feature type="turn" evidence="43">
    <location>
        <begin position="723"/>
        <end position="726"/>
    </location>
</feature>
<feature type="helix" evidence="36">
    <location>
        <begin position="727"/>
        <end position="741"/>
    </location>
</feature>
<feature type="strand" evidence="36">
    <location>
        <begin position="742"/>
        <end position="744"/>
    </location>
</feature>
<feature type="helix" evidence="43">
    <location>
        <begin position="746"/>
        <end position="749"/>
    </location>
</feature>
<feature type="helix" evidence="36">
    <location>
        <begin position="753"/>
        <end position="760"/>
    </location>
</feature>
<feature type="helix" evidence="39">
    <location>
        <begin position="767"/>
        <end position="773"/>
    </location>
</feature>
<feature type="strand" evidence="39">
    <location>
        <begin position="775"/>
        <end position="777"/>
    </location>
</feature>
<feature type="helix" evidence="39">
    <location>
        <begin position="785"/>
        <end position="795"/>
    </location>
</feature>
<feature type="helix" evidence="39">
    <location>
        <begin position="799"/>
        <end position="810"/>
    </location>
</feature>
<feature type="strand" evidence="39">
    <location>
        <begin position="811"/>
        <end position="814"/>
    </location>
</feature>
<feature type="helix" evidence="39">
    <location>
        <begin position="820"/>
        <end position="822"/>
    </location>
</feature>
<feature type="strand" evidence="39">
    <location>
        <begin position="826"/>
        <end position="828"/>
    </location>
</feature>
<feature type="strand" evidence="40">
    <location>
        <begin position="831"/>
        <end position="833"/>
    </location>
</feature>
<feature type="strand" evidence="40">
    <location>
        <begin position="839"/>
        <end position="841"/>
    </location>
</feature>
<feature type="turn" evidence="40">
    <location>
        <begin position="842"/>
        <end position="845"/>
    </location>
</feature>
<feature type="strand" evidence="40">
    <location>
        <begin position="846"/>
        <end position="849"/>
    </location>
</feature>
<feature type="helix" evidence="39">
    <location>
        <begin position="855"/>
        <end position="867"/>
    </location>
</feature>
<gene>
    <name evidence="33" type="primary">UBE3A</name>
    <name evidence="28" type="synonym">E6AP</name>
    <name evidence="29" type="synonym">EPVE6AP</name>
    <name evidence="29" type="synonym">HPVE6A</name>
</gene>
<sequence length="875" mass="100688">MEKLHQCYWKSGEPQSDDIEASRMKRAAAKHLIERYYHQLTEGCGNEACTNEFCASCPTFLRMDNNAAAIKALELYKINAKLCDPHPSKKGASSAYLENSKGAPNNSCSEIKMNKKGARIDFKDVTYLTEEKVYEILELCREREDYSPLIRVIGRVFSSAEALVQSFRKVKQHTKEELKSLQAKDEDKDEDEKEKAACSAAAMEEDSEASSSRIGDSSQGDNNLQKLGPDDVSVDIDAIRRVYTRLLSNEKIETAFLNALVYLSPNVECDLTYHNVYSRDPNYLNLFIIVMENRNLHSPEYLEMALPLFCKAMSKLPLAAQGKLIRLWSKYNADQIRRMMETFQQLITYKVISNEFNSRNLVNDDDAIVAASKCLKMVYYANVVGGEVDTNHNEEDDEEPIPESSELTLQELLGEERRNKKGPRVDPLETELGVKTLDCRKPLIPFEEFINEPLNEVLEMDKDYTFFKVETENKFSFMTCPFILNAVTKNLGLYYDNRIRMYSERRITVLYSLVQGQQLNPYLRLKVRRDHIIDDALVRLEMIAMENPADLKKQLYVEFEGEQGVDEGGVSKEFFQLVVEEIFNPDIGMFTYDESTKLFWFNPSSFETEGQFTLIGIVLGLAIYNNCILDVHFPMVVYRKLMGKKGTFRDLGDSHPVLYQSLKDLLEYEGNVEDDMMITFQISQTDLFGNPMMYDLKENGDKIPITNENRKEFVNLYSDYILNKSVEKQFKAFRRGFHMVTNESPLKYLFRPEEIELLICGSRNLDFQALEETTEYDGGYTRDSVLIREFWEIVHSFTDEQKRLFLQFTTGTDRAPVGGLGKLKMIIAKNGPDTERLPTSHTCFNVLLLPEYSSKEKLKERLLKAITYAKGFGML</sequence>